<reference key="1">
    <citation type="journal article" date="1991" name="Cell">
        <title>A novel arachidonic acid-selective cytosolic PLA2 contains a Ca(2+)-dependent translocation domain with homology to PKC and GAP.</title>
        <authorList>
            <person name="Clark J.D."/>
            <person name="Lin L.-L."/>
            <person name="Kriz R.W."/>
            <person name="Ramesha C.S."/>
            <person name="Sultzman L.A."/>
            <person name="Lin A.Y."/>
            <person name="Milona N."/>
            <person name="Knopf J.L."/>
        </authorList>
    </citation>
    <scope>NUCLEOTIDE SEQUENCE [MRNA]</scope>
    <scope>PARTIAL PROTEIN SEQUENCE</scope>
    <scope>VARIANT LYS-651</scope>
</reference>
<reference key="2">
    <citation type="journal article" date="1991" name="J. Biol. Chem.">
        <title>Molecular cloning and expression of human Ca(2+)-sensitive cytosolic phospholipase A2.</title>
        <authorList>
            <person name="Sharp J."/>
            <person name="White D."/>
            <person name="Chiou G."/>
            <person name="Goodson T."/>
            <person name="Gamboa G."/>
            <person name="McClure D."/>
            <person name="Burgett S."/>
            <person name="Hoskins J."/>
            <person name="Skatrud P."/>
            <person name="Sportsman J."/>
            <person name="Becker G."/>
            <person name="Kang L."/>
            <person name="Roberts E."/>
            <person name="Kramer R."/>
        </authorList>
    </citation>
    <scope>NUCLEOTIDE SEQUENCE [MRNA]</scope>
    <scope>VARIANT LYS-651</scope>
</reference>
<reference key="3">
    <citation type="submission" date="2004-02" db="EMBL/GenBank/DDBJ databases">
        <authorList>
            <consortium name="NIEHS SNPs program"/>
        </authorList>
    </citation>
    <scope>NUCLEOTIDE SEQUENCE [GENOMIC DNA]</scope>
    <scope>VARIANTS ILE-224 AND LYS-651</scope>
</reference>
<reference key="4">
    <citation type="journal article" date="2006" name="Nature">
        <title>The DNA sequence and biological annotation of human chromosome 1.</title>
        <authorList>
            <person name="Gregory S.G."/>
            <person name="Barlow K.F."/>
            <person name="McLay K.E."/>
            <person name="Kaul R."/>
            <person name="Swarbreck D."/>
            <person name="Dunham A."/>
            <person name="Scott C.E."/>
            <person name="Howe K.L."/>
            <person name="Woodfine K."/>
            <person name="Spencer C.C.A."/>
            <person name="Jones M.C."/>
            <person name="Gillson C."/>
            <person name="Searle S."/>
            <person name="Zhou Y."/>
            <person name="Kokocinski F."/>
            <person name="McDonald L."/>
            <person name="Evans R."/>
            <person name="Phillips K."/>
            <person name="Atkinson A."/>
            <person name="Cooper R."/>
            <person name="Jones C."/>
            <person name="Hall R.E."/>
            <person name="Andrews T.D."/>
            <person name="Lloyd C."/>
            <person name="Ainscough R."/>
            <person name="Almeida J.P."/>
            <person name="Ambrose K.D."/>
            <person name="Anderson F."/>
            <person name="Andrew R.W."/>
            <person name="Ashwell R.I.S."/>
            <person name="Aubin K."/>
            <person name="Babbage A.K."/>
            <person name="Bagguley C.L."/>
            <person name="Bailey J."/>
            <person name="Beasley H."/>
            <person name="Bethel G."/>
            <person name="Bird C.P."/>
            <person name="Bray-Allen S."/>
            <person name="Brown J.Y."/>
            <person name="Brown A.J."/>
            <person name="Buckley D."/>
            <person name="Burton J."/>
            <person name="Bye J."/>
            <person name="Carder C."/>
            <person name="Chapman J.C."/>
            <person name="Clark S.Y."/>
            <person name="Clarke G."/>
            <person name="Clee C."/>
            <person name="Cobley V."/>
            <person name="Collier R.E."/>
            <person name="Corby N."/>
            <person name="Coville G.J."/>
            <person name="Davies J."/>
            <person name="Deadman R."/>
            <person name="Dunn M."/>
            <person name="Earthrowl M."/>
            <person name="Ellington A.G."/>
            <person name="Errington H."/>
            <person name="Frankish A."/>
            <person name="Frankland J."/>
            <person name="French L."/>
            <person name="Garner P."/>
            <person name="Garnett J."/>
            <person name="Gay L."/>
            <person name="Ghori M.R.J."/>
            <person name="Gibson R."/>
            <person name="Gilby L.M."/>
            <person name="Gillett W."/>
            <person name="Glithero R.J."/>
            <person name="Grafham D.V."/>
            <person name="Griffiths C."/>
            <person name="Griffiths-Jones S."/>
            <person name="Grocock R."/>
            <person name="Hammond S."/>
            <person name="Harrison E.S.I."/>
            <person name="Hart E."/>
            <person name="Haugen E."/>
            <person name="Heath P.D."/>
            <person name="Holmes S."/>
            <person name="Holt K."/>
            <person name="Howden P.J."/>
            <person name="Hunt A.R."/>
            <person name="Hunt S.E."/>
            <person name="Hunter G."/>
            <person name="Isherwood J."/>
            <person name="James R."/>
            <person name="Johnson C."/>
            <person name="Johnson D."/>
            <person name="Joy A."/>
            <person name="Kay M."/>
            <person name="Kershaw J.K."/>
            <person name="Kibukawa M."/>
            <person name="Kimberley A.M."/>
            <person name="King A."/>
            <person name="Knights A.J."/>
            <person name="Lad H."/>
            <person name="Laird G."/>
            <person name="Lawlor S."/>
            <person name="Leongamornlert D.A."/>
            <person name="Lloyd D.M."/>
            <person name="Loveland J."/>
            <person name="Lovell J."/>
            <person name="Lush M.J."/>
            <person name="Lyne R."/>
            <person name="Martin S."/>
            <person name="Mashreghi-Mohammadi M."/>
            <person name="Matthews L."/>
            <person name="Matthews N.S.W."/>
            <person name="McLaren S."/>
            <person name="Milne S."/>
            <person name="Mistry S."/>
            <person name="Moore M.J.F."/>
            <person name="Nickerson T."/>
            <person name="O'Dell C.N."/>
            <person name="Oliver K."/>
            <person name="Palmeiri A."/>
            <person name="Palmer S.A."/>
            <person name="Parker A."/>
            <person name="Patel D."/>
            <person name="Pearce A.V."/>
            <person name="Peck A.I."/>
            <person name="Pelan S."/>
            <person name="Phelps K."/>
            <person name="Phillimore B.J."/>
            <person name="Plumb R."/>
            <person name="Rajan J."/>
            <person name="Raymond C."/>
            <person name="Rouse G."/>
            <person name="Saenphimmachak C."/>
            <person name="Sehra H.K."/>
            <person name="Sheridan E."/>
            <person name="Shownkeen R."/>
            <person name="Sims S."/>
            <person name="Skuce C.D."/>
            <person name="Smith M."/>
            <person name="Steward C."/>
            <person name="Subramanian S."/>
            <person name="Sycamore N."/>
            <person name="Tracey A."/>
            <person name="Tromans A."/>
            <person name="Van Helmond Z."/>
            <person name="Wall M."/>
            <person name="Wallis J.M."/>
            <person name="White S."/>
            <person name="Whitehead S.L."/>
            <person name="Wilkinson J.E."/>
            <person name="Willey D.L."/>
            <person name="Williams H."/>
            <person name="Wilming L."/>
            <person name="Wray P.W."/>
            <person name="Wu Z."/>
            <person name="Coulson A."/>
            <person name="Vaudin M."/>
            <person name="Sulston J.E."/>
            <person name="Durbin R.M."/>
            <person name="Hubbard T."/>
            <person name="Wooster R."/>
            <person name="Dunham I."/>
            <person name="Carter N.P."/>
            <person name="McVean G."/>
            <person name="Ross M.T."/>
            <person name="Harrow J."/>
            <person name="Olson M.V."/>
            <person name="Beck S."/>
            <person name="Rogers J."/>
            <person name="Bentley D.R."/>
        </authorList>
    </citation>
    <scope>NUCLEOTIDE SEQUENCE [LARGE SCALE GENOMIC DNA]</scope>
</reference>
<reference key="5">
    <citation type="journal article" date="2004" name="Genome Res.">
        <title>The status, quality, and expansion of the NIH full-length cDNA project: the Mammalian Gene Collection (MGC).</title>
        <authorList>
            <consortium name="The MGC Project Team"/>
        </authorList>
    </citation>
    <scope>NUCLEOTIDE SEQUENCE [LARGE SCALE MRNA]</scope>
    <scope>VARIANT LYS-651</scope>
</reference>
<reference key="6">
    <citation type="journal article" date="1993" name="Cell">
        <title>cPLA2 is phosphorylated and activated by MAP kinase.</title>
        <authorList>
            <person name="Lin L.-L."/>
            <person name="Wartmann M."/>
            <person name="Lin A.Y."/>
            <person name="Knopf J.L."/>
            <person name="Seth A."/>
            <person name="Davis R.J."/>
        </authorList>
    </citation>
    <scope>MUTAGENESIS OF SER-505</scope>
    <scope>PHOSPHORYLATION AT SER-505</scope>
    <scope>ACTIVITY REGULATION</scope>
</reference>
<reference key="7">
    <citation type="journal article" date="1994" name="J. Biol. Chem.">
        <title>Serine 228 is essential for catalytic activities of 85-kDa cytosolic phospholipase A2.</title>
        <authorList>
            <person name="Sharp J.D."/>
            <person name="Pickard R.T."/>
            <person name="Chiou X.G."/>
            <person name="Manetta J.V."/>
            <person name="Kovacevic S."/>
            <person name="Miller J.R."/>
            <person name="Varshavsky A.D."/>
            <person name="Roberts E.F."/>
            <person name="Strifler B.A."/>
            <person name="Brems D.N."/>
            <person name="Kramer R.M."/>
        </authorList>
    </citation>
    <scope>ACTIVE SITE</scope>
    <scope>MUTAGENESIS OF CYS-139; CYS-141; CYS-151; SER-195; SER-215; CYS-220; SER-228; CYS-324; CYS-331; SER-577; CYS-620; CYS-634 AND CYS-726</scope>
    <scope>BIOPHYSICOCHEMICAL PROPERTIES</scope>
</reference>
<reference key="8">
    <citation type="journal article" date="1995" name="Biochemistry">
        <title>Multiple enzymatic activities of the human cytosolic 85-kDa phospholipase A2: hydrolytic reactions and acyl transfer to glycerol.</title>
        <authorList>
            <person name="Hanel A.M."/>
            <person name="Gelb M.H."/>
        </authorList>
    </citation>
    <scope>FUNCTION</scope>
    <scope>CATALYTIC ACTIVITY</scope>
</reference>
<reference key="9">
    <citation type="journal article" date="1996" name="Biochemistry">
        <title>Functional identification of the active-site nucleophile of the human 85-kDa cytosolic phospholipase A2.</title>
        <authorList>
            <person name="Huang Z."/>
            <person name="Payette P."/>
            <person name="Abdullah K."/>
            <person name="Cromlish W.A."/>
            <person name="Kennedy B.P."/>
        </authorList>
    </citation>
    <scope>FUNCTION</scope>
    <scope>CATALYTIC ACTIVITY</scope>
    <scope>ACTIVE SITE</scope>
    <scope>MUTAGENESIS OF SER-228</scope>
</reference>
<reference key="10">
    <citation type="journal article" date="1996" name="J. Biol. Chem.">
        <title>Identification of essential residues for the catalytic function of 85-kDa cytosolic phospholipase A2. Probing the role of histidine, aspartic acid, cysteine, and arginine.</title>
        <authorList>
            <person name="Pickard R.T."/>
            <person name="Chiou X.G."/>
            <person name="Strifler B.A."/>
            <person name="DeFelippis M.R."/>
            <person name="Hyslop P.A."/>
            <person name="Tebbe A.L."/>
            <person name="Yee Y.K."/>
            <person name="Reynolds L.J."/>
            <person name="Dennis E.A."/>
            <person name="Kramer R.M."/>
            <person name="Sharp J.D."/>
        </authorList>
    </citation>
    <scope>FUNCTION</scope>
    <scope>ACTIVE SITE</scope>
    <scope>CATALYTIC ACTIVITY</scope>
    <scope>MUTAGENESIS OF ARG-200; SER-228 AND ASP-549</scope>
</reference>
<reference key="11">
    <citation type="journal article" date="1998" name="Biochem. J.">
        <title>Inhibition of human cytosolic phospholipase A2 by human annexin V.</title>
        <authorList>
            <person name="Buckland A.G."/>
            <person name="Wilton D.C."/>
        </authorList>
    </citation>
    <scope>FUNCTION</scope>
    <scope>CATALYTIC ACTIVITY</scope>
    <scope>ACTIVITY REGULATION</scope>
</reference>
<reference key="12">
    <citation type="journal article" date="1998" name="J. Biol. Chem.">
        <title>Identification of the phosphorylation sites of cytosolic phospholipase A2 in agonist-stimulated human platelets and HeLa cells.</title>
        <authorList>
            <person name="Boersch-Haubold A.G."/>
            <person name="Bartoli F."/>
            <person name="Asselin J."/>
            <person name="Dudler T."/>
            <person name="Kramer R.M."/>
            <person name="Apitz-Castro R."/>
            <person name="Watson S.P."/>
            <person name="Gelb M.H."/>
        </authorList>
    </citation>
    <scope>PHOSPHORYLATION AT SER-505 AND SER-727</scope>
</reference>
<reference key="13">
    <citation type="journal article" date="1999" name="J. Biol. Chem.">
        <title>Molecular characterization of cytosolic phospholipase A2-beta.</title>
        <authorList>
            <person name="Song C."/>
            <person name="Chang X.J."/>
            <person name="Bean K.M."/>
            <person name="Proia M.S."/>
            <person name="Knopf J.L."/>
            <person name="Kriz R.W."/>
        </authorList>
    </citation>
    <scope>FUNCTION</scope>
    <scope>CATALYTIC ACTIVITY</scope>
</reference>
<reference key="14">
    <citation type="journal article" date="2001" name="J. Biol. Chem.">
        <title>Intracellular calcium signals regulating cytosolic phospholipase A2 translocation to internal membranes.</title>
        <authorList>
            <person name="Evans J.H."/>
            <person name="Spencer D.M."/>
            <person name="Zweifach A."/>
            <person name="Leslie C.C."/>
        </authorList>
    </citation>
    <scope>SUBCELLULAR LOCATION</scope>
    <scope>DOMAIN</scope>
</reference>
<reference key="15">
    <citation type="journal article" date="2001" name="Mol. Cell. Biol.">
        <title>PLIP, a novel splice variant of Tip60, interacts with group IV cytosolic phospholipase A(2), induces apoptosis, and potentiates prostaglandin production.</title>
        <authorList>
            <person name="Sheridan A.M."/>
            <person name="Force T."/>
            <person name="Yoon H.J."/>
            <person name="O'Leary E."/>
            <person name="Choukroun G."/>
            <person name="Taheri M.R."/>
            <person name="Bonventre J.V."/>
        </authorList>
    </citation>
    <scope>INTERACTION WITH KAT5</scope>
</reference>
<reference key="16">
    <citation type="journal article" date="2003" name="J. Biol. Chem.">
        <title>Essential Ca(2+)-independent role of the group IVA cytosolic phospholipase A(2) C2 domain for interfacial activity.</title>
        <authorList>
            <person name="Six D.A."/>
            <person name="Dennis E.A."/>
        </authorList>
    </citation>
    <scope>FUNCTION</scope>
    <scope>CATALYTIC ACTIVITY</scope>
    <scope>ACTIVITY REGULATION</scope>
    <scope>MUTAGENESIS OF ASP-43; SER-437; SER-454; LYS-488; SER-505; LYS-541; LYS-543; LYS-544 AND SER-727</scope>
    <scope>DOMAIN</scope>
</reference>
<reference key="17">
    <citation type="journal article" date="2004" name="J. Biol. Chem.">
        <title>Cloning of a gene for a novel epithelium-specific cytosolic phospholipase A2, cPLA2delta, induced in psoriatic skin.</title>
        <authorList>
            <person name="Chiba H."/>
            <person name="Michibata H."/>
            <person name="Wakimoto K."/>
            <person name="Seishima M."/>
            <person name="Kawasaki S."/>
            <person name="Okubo K."/>
            <person name="Mitsui H."/>
            <person name="Torii H."/>
            <person name="Imai Y."/>
        </authorList>
    </citation>
    <scope>FUNCTION</scope>
    <scope>CATALYTIC ACTIVITY</scope>
</reference>
<reference key="18">
    <citation type="journal article" date="2006" name="Cell">
        <title>Global, in vivo, and site-specific phosphorylation dynamics in signaling networks.</title>
        <authorList>
            <person name="Olsen J.V."/>
            <person name="Blagoev B."/>
            <person name="Gnad F."/>
            <person name="Macek B."/>
            <person name="Kumar C."/>
            <person name="Mortensen P."/>
            <person name="Mann M."/>
        </authorList>
    </citation>
    <scope>IDENTIFICATION BY MASS SPECTROMETRY [LARGE SCALE ANALYSIS]</scope>
    <source>
        <tissue>Cervix carcinoma</tissue>
    </source>
</reference>
<reference key="19">
    <citation type="journal article" date="2006" name="J. Biol. Chem.">
        <title>Identification of the expressed form of human cytosolic phospholipase A2beta (cPLA2beta): cPLA2beta3 is a novel variant localized to mitochondria and early endosomes.</title>
        <authorList>
            <person name="Ghosh M."/>
            <person name="Loper R."/>
            <person name="Gelb M.H."/>
            <person name="Leslie C.C."/>
        </authorList>
    </citation>
    <scope>FUNCTION</scope>
    <scope>CATALYTIC ACTIVITY</scope>
</reference>
<reference key="20">
    <citation type="journal article" date="2006" name="Nat. Biotechnol.">
        <title>A probability-based approach for high-throughput protein phosphorylation analysis and site localization.</title>
        <authorList>
            <person name="Beausoleil S.A."/>
            <person name="Villen J."/>
            <person name="Gerber S.A."/>
            <person name="Rush J."/>
            <person name="Gygi S.P."/>
        </authorList>
    </citation>
    <scope>PHOSPHORYLATION [LARGE SCALE ANALYSIS] AT SER-729</scope>
    <scope>IDENTIFICATION BY MASS SPECTROMETRY [LARGE SCALE ANALYSIS]</scope>
    <source>
        <tissue>Cervix carcinoma</tissue>
    </source>
</reference>
<reference key="21">
    <citation type="journal article" date="2007" name="J. Biol. Chem.">
        <title>Ceramide-1-phosphate binds group IVA cytosolic phospholipase a2 via a novel site in the C2 domain.</title>
        <authorList>
            <person name="Stahelin R.V."/>
            <person name="Subramanian P."/>
            <person name="Vora M."/>
            <person name="Cho W."/>
            <person name="Chalfant C.E."/>
        </authorList>
    </citation>
    <scope>FUNCTION</scope>
    <scope>CATALYTIC ACTIVITY</scope>
    <scope>ACTIVITY REGULATION</scope>
    <scope>MUTAGENESIS OF 57-ARG--ARG-59</scope>
    <scope>BIOPHYSICOCHEMICAL PROPERTIES</scope>
</reference>
<reference key="22">
    <citation type="journal article" date="2008" name="J. Proteome Res.">
        <title>Phosphoproteome of resting human platelets.</title>
        <authorList>
            <person name="Zahedi R.P."/>
            <person name="Lewandrowski U."/>
            <person name="Wiesner J."/>
            <person name="Wortelkamp S."/>
            <person name="Moebius J."/>
            <person name="Schuetz C."/>
            <person name="Walter U."/>
            <person name="Gambaryan S."/>
            <person name="Sickmann A."/>
        </authorList>
    </citation>
    <scope>IDENTIFICATION BY MASS SPECTROMETRY [LARGE SCALE ANALYSIS]</scope>
    <source>
        <tissue>Platelet</tissue>
    </source>
</reference>
<reference key="23">
    <citation type="journal article" date="2008" name="Proc. Natl. Acad. Sci. U.S.A.">
        <title>A quantitative atlas of mitotic phosphorylation.</title>
        <authorList>
            <person name="Dephoure N."/>
            <person name="Zhou C."/>
            <person name="Villen J."/>
            <person name="Beausoleil S.A."/>
            <person name="Bakalarski C.E."/>
            <person name="Elledge S.J."/>
            <person name="Gygi S.P."/>
        </authorList>
    </citation>
    <scope>PHOSPHORYLATION [LARGE SCALE ANALYSIS] AT THR-268; SER-437; SER-727 AND SER-729</scope>
    <scope>IDENTIFICATION BY MASS SPECTROMETRY [LARGE SCALE ANALYSIS]</scope>
    <source>
        <tissue>Cervix carcinoma</tissue>
    </source>
</reference>
<reference key="24">
    <citation type="journal article" date="2010" name="Sci. Signal.">
        <title>Quantitative phosphoproteomics reveals widespread full phosphorylation site occupancy during mitosis.</title>
        <authorList>
            <person name="Olsen J.V."/>
            <person name="Vermeulen M."/>
            <person name="Santamaria A."/>
            <person name="Kumar C."/>
            <person name="Miller M.L."/>
            <person name="Jensen L.J."/>
            <person name="Gnad F."/>
            <person name="Cox J."/>
            <person name="Jensen T.S."/>
            <person name="Nigg E.A."/>
            <person name="Brunak S."/>
            <person name="Mann M."/>
        </authorList>
    </citation>
    <scope>PHOSPHORYLATION [LARGE SCALE ANALYSIS] AT THR-268; SER-437 AND SER-729</scope>
    <scope>IDENTIFICATION BY MASS SPECTROMETRY [LARGE SCALE ANALYSIS]</scope>
    <source>
        <tissue>Cervix carcinoma</tissue>
    </source>
</reference>
<reference key="25">
    <citation type="journal article" date="2011" name="BMC Syst. Biol.">
        <title>Initial characterization of the human central proteome.</title>
        <authorList>
            <person name="Burkard T.R."/>
            <person name="Planyavsky M."/>
            <person name="Kaupe I."/>
            <person name="Breitwieser F.P."/>
            <person name="Buerckstuemmer T."/>
            <person name="Bennett K.L."/>
            <person name="Superti-Furga G."/>
            <person name="Colinge J."/>
        </authorList>
    </citation>
    <scope>IDENTIFICATION BY MASS SPECTROMETRY [LARGE SCALE ANALYSIS]</scope>
</reference>
<reference key="26">
    <citation type="journal article" date="2011" name="Sci. Signal.">
        <title>System-wide temporal characterization of the proteome and phosphoproteome of human embryonic stem cell differentiation.</title>
        <authorList>
            <person name="Rigbolt K.T."/>
            <person name="Prokhorova T.A."/>
            <person name="Akimov V."/>
            <person name="Henningsen J."/>
            <person name="Johansen P.T."/>
            <person name="Kratchmarova I."/>
            <person name="Kassem M."/>
            <person name="Mann M."/>
            <person name="Olsen J.V."/>
            <person name="Blagoev B."/>
        </authorList>
    </citation>
    <scope>PHOSPHORYLATION [LARGE SCALE ANALYSIS] AT SER-437</scope>
    <scope>IDENTIFICATION BY MASS SPECTROMETRY [LARGE SCALE ANALYSIS]</scope>
</reference>
<reference key="27">
    <citation type="journal article" date="2013" name="J. Proteome Res.">
        <title>Toward a comprehensive characterization of a human cancer cell phosphoproteome.</title>
        <authorList>
            <person name="Zhou H."/>
            <person name="Di Palma S."/>
            <person name="Preisinger C."/>
            <person name="Peng M."/>
            <person name="Polat A.N."/>
            <person name="Heck A.J."/>
            <person name="Mohammed S."/>
        </authorList>
    </citation>
    <scope>PHOSPHORYLATION [LARGE SCALE ANALYSIS] AT SER-2; THR-268; SER-435; SER-437; SER-727 AND SER-729</scope>
    <scope>IDENTIFICATION BY MASS SPECTROMETRY [LARGE SCALE ANALYSIS]</scope>
    <source>
        <tissue>Cervix carcinoma</tissue>
    </source>
</reference>
<reference key="28">
    <citation type="journal article" date="2016" name="Cell Chem. Biol.">
        <title>Cyclooxygenase-2 Mediated Oxidation of 2-Arachidonoyl-Lysophospholipids Identifies Unknown Lipid Signaling Pathways.</title>
        <authorList>
            <person name="Liu X."/>
            <person name="Moon S.H."/>
            <person name="Jenkins C.M."/>
            <person name="Sims H.F."/>
            <person name="Gross R.W."/>
        </authorList>
    </citation>
    <scope>FUNCTION</scope>
    <scope>CATALYTIC ACTIVITY</scope>
</reference>
<reference key="29">
    <citation type="journal article" date="2017" name="Nat. Struct. Mol. Biol.">
        <title>Site-specific mapping of the human SUMO proteome reveals co-modification with phosphorylation.</title>
        <authorList>
            <person name="Hendriks I.A."/>
            <person name="Lyon D."/>
            <person name="Young C."/>
            <person name="Jensen L.J."/>
            <person name="Vertegaal A.C."/>
            <person name="Nielsen M.L."/>
        </authorList>
    </citation>
    <scope>SUMOYLATION [LARGE SCALE ANALYSIS] AT LYS-541 AND LYS-606</scope>
    <scope>IDENTIFICATION BY MASS SPECTROMETRY [LARGE SCALE ANALYSIS]</scope>
</reference>
<reference key="30">
    <citation type="journal article" date="1998" name="J. Biol. Chem.">
        <title>Crystal structure of a calcium-phospholipid binding domain from cytosolic phospholipase A2.</title>
        <authorList>
            <person name="Perisic O."/>
            <person name="Fong S."/>
            <person name="Lynch D.E."/>
            <person name="Bycroft M."/>
            <person name="Williams R.L."/>
        </authorList>
    </citation>
    <scope>X-RAY CRYSTALLOGRAPHY (2.4 ANGSTROMS) OF 16-141 IN COMPLEX WITH CALCIUM IONS</scope>
    <scope>DOMAIN</scope>
</reference>
<reference key="31">
    <citation type="journal article" date="1998" name="J. Mol. Biol.">
        <title>Solution structure and membrane interactions of the C2 domain of cytosolic phospholipase A2.</title>
        <authorList>
            <person name="Xu G.-Y."/>
            <person name="McDonagh T."/>
            <person name="Yu H.-A."/>
            <person name="Nalefski E.A."/>
            <person name="Clark J.D."/>
            <person name="Cumming D.A."/>
        </authorList>
    </citation>
    <scope>STRUCTURE BY NMR OF 1-138 IN COMPLEX WITH CALCIUM IONS</scope>
    <scope>DOMAIN</scope>
    <scope>SUBCELLULAR LOCATION</scope>
</reference>
<reference key="32">
    <citation type="journal article" date="1999" name="Cell">
        <title>Crystal structure of human cytosolic phospholipase A2 reveals a novel topology and catalytic mechanism.</title>
        <authorList>
            <person name="Dessen A."/>
            <person name="Tang J."/>
            <person name="Schmidt H."/>
            <person name="Stahl M."/>
            <person name="Clark J.D."/>
            <person name="Seehra J."/>
            <person name="Somers W.S."/>
        </authorList>
    </citation>
    <scope>X-RAY CRYSTALLOGRAPHY (2.5 ANGSTROMS) IN COMPLEX WITH CALCIUM IONS</scope>
    <scope>ACTIVE SITE</scope>
</reference>
<reference key="33">
    <citation type="journal article" date="2006" name="Science">
        <title>The consensus coding sequences of human breast and colorectal cancers.</title>
        <authorList>
            <person name="Sjoeblom T."/>
            <person name="Jones S."/>
            <person name="Wood L.D."/>
            <person name="Parsons D.W."/>
            <person name="Lin J."/>
            <person name="Barber T.D."/>
            <person name="Mandelker D."/>
            <person name="Leary R.J."/>
            <person name="Ptak J."/>
            <person name="Silliman N."/>
            <person name="Szabo S."/>
            <person name="Buckhaults P."/>
            <person name="Farrell C."/>
            <person name="Meeh P."/>
            <person name="Markowitz S.D."/>
            <person name="Willis J."/>
            <person name="Dawson D."/>
            <person name="Willson J.K.V."/>
            <person name="Gazdar A.F."/>
            <person name="Hartigan J."/>
            <person name="Wu L."/>
            <person name="Liu C."/>
            <person name="Parmigiani G."/>
            <person name="Park B.H."/>
            <person name="Bachman K.E."/>
            <person name="Papadopoulos N."/>
            <person name="Vogelstein B."/>
            <person name="Kinzler K.W."/>
            <person name="Velculescu V.E."/>
        </authorList>
    </citation>
    <scope>VARIANT [LARGE SCALE ANALYSIS] GLN-442</scope>
</reference>
<reference key="34">
    <citation type="journal article" date="2008" name="J. Clin. Invest.">
        <title>Inherited human cPLA(2alpha) deficiency is associated with impaired eicosanoid biosynthesis, small intestinal ulceration, and platelet dysfunction.</title>
        <authorList>
            <person name="Adler D.H."/>
            <person name="Cogan J.D."/>
            <person name="Phillips J.A."/>
            <person name="Schnetz-Boutaud N."/>
            <person name="Milne G.L."/>
            <person name="Iverson T."/>
            <person name="Stein J.A."/>
            <person name="Brenner D.A."/>
            <person name="Morrow J.D."/>
            <person name="Boutaud O."/>
            <person name="Oates J.A."/>
        </authorList>
    </citation>
    <scope>INVOLVEMENT IN GURDP</scope>
    <scope>VARIANTS GURDP PRO-111 AND HIS-485</scope>
    <scope>VARIANT LYS-651</scope>
    <scope>FUNCTION</scope>
    <scope>CATALYTIC ACTIVITY</scope>
    <scope>PATHWAY</scope>
</reference>
<reference key="35">
    <citation type="journal article" date="2014" name="Gut">
        <title>Cryptogenic multifocal ulcerating stenosing enteritis associated with homozygous deletion mutations in cytosolic phospholipase A2-alpha.</title>
        <authorList>
            <person name="Brooke M.A."/>
            <person name="Longhurst H.J."/>
            <person name="Plagnol V."/>
            <person name="Kirkby N.S."/>
            <person name="Mitchell J.A."/>
            <person name="Rueschendorf F."/>
            <person name="Warner T.D."/>
            <person name="Kelsell D.P."/>
            <person name="MacDonald T.T."/>
        </authorList>
    </citation>
    <scope>INVOLVEMENT IN GURDP</scope>
</reference>
<reference key="36">
    <citation type="journal article" date="2014" name="Thromb. Haemost.">
        <title>Bleeding diathesis and gastro-duodenal ulcers in inherited cytosolic phospholipase-A2 alpha deficiency.</title>
        <authorList>
            <person name="Faioni E.M."/>
            <person name="Razzari C."/>
            <person name="Zulueta A."/>
            <person name="Femia E.A."/>
            <person name="Fenu L."/>
            <person name="Trinchera M."/>
            <person name="Podda G.M."/>
            <person name="Pugliano M."/>
            <person name="Marongiu F."/>
            <person name="Cattaneo M."/>
        </authorList>
    </citation>
    <scope>INVOLVEMENT IN GURDP</scope>
    <scope>VARIANT GURDP HIS-575</scope>
    <scope>CHARACTERIZATION OF VARIANT GURDP HIS-575</scope>
    <scope>TISSUE SPECIFICITY</scope>
</reference>
<protein>
    <recommendedName>
        <fullName>Cytosolic phospholipase A2</fullName>
        <shortName>cPLA2</shortName>
    </recommendedName>
    <alternativeName>
        <fullName>Phospholipase A2 group IVA</fullName>
    </alternativeName>
    <domain>
        <recommendedName>
            <fullName>Phospholipase A2</fullName>
            <ecNumber evidence="7 10 11 13 15 22">3.1.1.4</ecNumber>
        </recommendedName>
        <alternativeName>
            <fullName>Phosphatidylcholine 2-acylhydrolase</fullName>
        </alternativeName>
    </domain>
    <domain>
        <recommendedName>
            <fullName>Lysophospholipase</fullName>
            <ecNumber evidence="10 13">3.1.1.5</ecNumber>
        </recommendedName>
    </domain>
</protein>
<gene>
    <name type="primary">PLA2G4A</name>
    <name type="synonym">CPLA2</name>
    <name type="synonym">PLA2G4</name>
</gene>
<sequence length="749" mass="85239">MSFIDPYQHIIVEHQYSHKFTVVVLRATKVTKGAFGDMLDTPDPYVELFISTTPDSRKRTRHFNNDINPVWNETFEFILDPNQENVLEITLMDANYVMDETLGTATFTVSSMKVGEKKEVPFIFNQVTEMVLEMSLEVCSCPDLRFSMALCDQEKTFRQQRKEHIRESMKKLLGPKNSEGLHSARDVPVVAILGSGGGFRAMVGFSGVMKALYESGILDCATYVAGLSGSTWYMSTLYSHPDFPEKGPEEINEELMKNVSHNPLLLLTPQKVKRYVESLWKKKSSGQPVTFTDIFGMLIGETLIHNRMNTTLSSLKEKVNTAQCPLPLFTCLHVKPDVSELMFADWVEFSPYEIGMAKYGTFMAPDLFGSKFFMGTVVKKYEENPLHFLMGVWGSAFSILFNRVLGVSGSQSRGSTMEEELENITTKHIVSNDSSDSDDESHEPKGTENEDAGSDYQSDNQASWIHRMIMALVSDSALFNTREGRAGKVHNFMLGLNLNTSYPLSPLSDFATQDSFDDDELDAAVADPDEFERIYEPLDVKSKKIHVVDSGLTFNLPYPLILRPQRGVDLIISFDFSARPSDSSPPFKELLLAEKWAKMNKLPFPKIDPYVFDREGLKECYVFKPKNPDMEKDCPTIIHFVLANINFRKYRAPGVPRETEEEKEIADFDIFDDPESPFSTFNFQYPNQAFKRLHDLMHFNTLNNIDVIKEAMVESIEYRRQNPSRCSVSLSNVEARRFFNKEFLSKPKA</sequence>
<feature type="chain" id="PRO_0000187262" description="Cytosolic phospholipase A2">
    <location>
        <begin position="1"/>
        <end position="749"/>
    </location>
</feature>
<feature type="domain" description="C2" evidence="3">
    <location>
        <begin position="6"/>
        <end position="122"/>
    </location>
</feature>
<feature type="domain" description="PLA2c" evidence="4">
    <location>
        <begin position="140"/>
        <end position="740"/>
    </location>
</feature>
<feature type="region of interest" description="Phospholipid binding" evidence="32">
    <location>
        <begin position="1"/>
        <end position="178"/>
    </location>
</feature>
<feature type="region of interest" description="Disordered" evidence="5">
    <location>
        <begin position="409"/>
        <end position="457"/>
    </location>
</feature>
<feature type="active site" description="Nucleophile" evidence="6 23 25 26">
    <location>
        <position position="228"/>
    </location>
</feature>
<feature type="active site" description="Proton acceptor" evidence="6 26">
    <location>
        <position position="549"/>
    </location>
</feature>
<feature type="binding site">
    <location>
        <position position="40"/>
    </location>
    <ligand>
        <name>Ca(2+)</name>
        <dbReference type="ChEBI" id="CHEBI:29108"/>
        <label>1</label>
    </ligand>
</feature>
<feature type="binding site">
    <location>
        <position position="40"/>
    </location>
    <ligand>
        <name>Ca(2+)</name>
        <dbReference type="ChEBI" id="CHEBI:29108"/>
        <label>2</label>
    </ligand>
</feature>
<feature type="binding site">
    <location>
        <position position="41"/>
    </location>
    <ligand>
        <name>Ca(2+)</name>
        <dbReference type="ChEBI" id="CHEBI:29108"/>
        <label>1</label>
    </ligand>
</feature>
<feature type="binding site">
    <location>
        <position position="43"/>
    </location>
    <ligand>
        <name>Ca(2+)</name>
        <dbReference type="ChEBI" id="CHEBI:29108"/>
        <label>1</label>
    </ligand>
</feature>
<feature type="binding site">
    <location>
        <position position="43"/>
    </location>
    <ligand>
        <name>Ca(2+)</name>
        <dbReference type="ChEBI" id="CHEBI:29108"/>
        <label>2</label>
    </ligand>
</feature>
<feature type="binding site">
    <location>
        <position position="65"/>
    </location>
    <ligand>
        <name>Ca(2+)</name>
        <dbReference type="ChEBI" id="CHEBI:29108"/>
        <label>1</label>
    </ligand>
</feature>
<feature type="binding site">
    <location>
        <position position="93"/>
    </location>
    <ligand>
        <name>Ca(2+)</name>
        <dbReference type="ChEBI" id="CHEBI:29108"/>
        <label>2</label>
    </ligand>
</feature>
<feature type="binding site">
    <location>
        <position position="94"/>
    </location>
    <ligand>
        <name>Ca(2+)</name>
        <dbReference type="ChEBI" id="CHEBI:29108"/>
        <label>2</label>
    </ligand>
</feature>
<feature type="binding site">
    <location>
        <position position="95"/>
    </location>
    <ligand>
        <name>Ca(2+)</name>
        <dbReference type="ChEBI" id="CHEBI:29108"/>
        <label>2</label>
    </ligand>
</feature>
<feature type="modified residue" description="Phosphoserine" evidence="46">
    <location>
        <position position="2"/>
    </location>
</feature>
<feature type="modified residue" description="Phosphothreonine" evidence="43 44 46">
    <location>
        <position position="268"/>
    </location>
</feature>
<feature type="modified residue" description="Phosphoserine" evidence="2">
    <location>
        <position position="434"/>
    </location>
</feature>
<feature type="modified residue" description="Phosphoserine" evidence="46">
    <location>
        <position position="435"/>
    </location>
</feature>
<feature type="modified residue" description="Phosphoserine" evidence="43 44 45 46">
    <location>
        <position position="437"/>
    </location>
</feature>
<feature type="modified residue" description="Phosphoserine; by MAPK" evidence="24 29">
    <location>
        <position position="505"/>
    </location>
</feature>
<feature type="modified residue" description="Phosphoserine" evidence="2">
    <location>
        <position position="515"/>
    </location>
</feature>
<feature type="modified residue" description="Phosphoserine" evidence="29 43 46">
    <location>
        <position position="727"/>
    </location>
</feature>
<feature type="modified residue" description="Phosphoserine" evidence="42 43 44 46">
    <location>
        <position position="729"/>
    </location>
</feature>
<feature type="cross-link" description="Glycyl lysine isopeptide (Lys-Gly) (interchain with G-Cter in SUMO2)" evidence="47">
    <location>
        <position position="541"/>
    </location>
</feature>
<feature type="cross-link" description="Glycyl lysine isopeptide (Lys-Gly) (interchain with G-Cter in SUMO2)" evidence="47">
    <location>
        <position position="606"/>
    </location>
</feature>
<feature type="sequence variant" id="VAR_029276" description="In dbSNP:rs28395828.">
    <original>G</original>
    <variation>R</variation>
    <location>
        <position position="103"/>
    </location>
</feature>
<feature type="sequence variant" id="VAR_070778" description="In GURDP; uncertain significance; dbSNP:rs121434634." evidence="16">
    <original>S</original>
    <variation>P</variation>
    <location>
        <position position="111"/>
    </location>
</feature>
<feature type="sequence variant" id="VAR_018760" description="In dbSNP:rs12720588." evidence="31">
    <original>V</original>
    <variation>I</variation>
    <location>
        <position position="224"/>
    </location>
</feature>
<feature type="sequence variant" id="VAR_035826" description="In a breast cancer sample; somatic mutation; dbSNP:rs370896190." evidence="14">
    <original>H</original>
    <variation>Q</variation>
    <location>
        <position position="442"/>
    </location>
</feature>
<feature type="sequence variant" id="VAR_070779" description="In GURDP; uncertain significance; dbSNP:rs121434635." evidence="16">
    <original>R</original>
    <variation>H</variation>
    <location>
        <position position="485"/>
    </location>
</feature>
<feature type="sequence variant" id="VAR_082091" description="In GURDP; decreased protein expression, if any, in platelets from homozygous patients; dbSNP:rs1557895416." evidence="20">
    <original>D</original>
    <variation>H</variation>
    <location>
        <position position="575"/>
    </location>
</feature>
<feature type="sequence variant" id="VAR_062128" description="In dbSNP:rs28395831.">
    <original>I</original>
    <variation>V</variation>
    <location>
        <position position="637"/>
    </location>
</feature>
<feature type="sequence variant" id="VAR_018424" description="In dbSNP:rs2307198." evidence="12 16 17 18 31">
    <original>R</original>
    <variation>K</variation>
    <location>
        <position position="651"/>
    </location>
</feature>
<feature type="mutagenesis site" description="Impairs phospholipase A2 and lysophospholipase activities in the absence of phosphoinositides. Has full activity in the presence of phosphoinositides." evidence="10">
    <original>D</original>
    <variation>N</variation>
    <location>
        <position position="43"/>
    </location>
</feature>
<feature type="mutagenesis site" description="Impairs binding to ceramide-1-phosphate." evidence="15">
    <original>RKR</original>
    <variation>AAA</variation>
    <location>
        <begin position="57"/>
        <end position="59"/>
    </location>
</feature>
<feature type="mutagenesis site" description="No effect on phospholipase activity; when associated with A-141 and A-151." evidence="23">
    <original>C</original>
    <variation>A</variation>
    <location>
        <position position="139"/>
    </location>
</feature>
<feature type="mutagenesis site" description="No effect on phospholipase activity; when associated with A-139 and A-151." evidence="23">
    <original>C</original>
    <variation>A</variation>
    <location>
        <position position="141"/>
    </location>
</feature>
<feature type="mutagenesis site" description="No effect on phospholipase activity; when associated with A-139 and A-141." evidence="23">
    <original>C</original>
    <variation>A</variation>
    <location>
        <position position="151"/>
    </location>
</feature>
<feature type="mutagenesis site" description="5-fold reduced phospholipase and lysophospholipase activities. 100-fold reduced phospholipase and lysophospholipase activities; when associated with A-577." evidence="23">
    <original>S</original>
    <variation>A</variation>
    <location>
        <position position="195"/>
    </location>
</feature>
<feature type="mutagenesis site" description="Abolishes phospholipase activity." evidence="26">
    <original>R</original>
    <variation>A</variation>
    <variation>H</variation>
    <location>
        <position position="200"/>
    </location>
</feature>
<feature type="mutagenesis site" description="Reduces phospholipase activity 200-fold." evidence="26">
    <original>R</original>
    <variation>K</variation>
    <location>
        <position position="200"/>
    </location>
</feature>
<feature type="mutagenesis site" description="No effect on phospholipase or lysophospholipase activity." evidence="23">
    <original>S</original>
    <variation>A</variation>
    <location>
        <position position="215"/>
    </location>
</feature>
<feature type="mutagenesis site" description="No effect on phospholipase activity." evidence="23">
    <original>C</original>
    <variation>A</variation>
    <location>
        <position position="220"/>
    </location>
</feature>
<feature type="mutagenesis site" description="Abolishes both phospholipase and lysophospholipase activities." evidence="23 25 26">
    <original>S</original>
    <variation>A</variation>
    <variation>C</variation>
    <variation>T</variation>
    <location>
        <position position="228"/>
    </location>
</feature>
<feature type="mutagenesis site" description="No effect on phospholipase activity; when associated with A-331." evidence="23">
    <original>C</original>
    <variation>A</variation>
    <location>
        <position position="324"/>
    </location>
</feature>
<feature type="mutagenesis site" description="No effect on phospholipase activity; when associated with A-324." evidence="23">
    <original>C</original>
    <variation>A</variation>
    <location>
        <position position="331"/>
    </location>
</feature>
<feature type="mutagenesis site" description="Reduces phospholipase A2 activity; when associated with A-454; A-505 and A-727." evidence="10">
    <original>S</original>
    <variation>A</variation>
    <location>
        <position position="437"/>
    </location>
</feature>
<feature type="mutagenesis site" description="Reduces phospholipase A2 activity; when associated with A-437; A-505 and A-727." evidence="10">
    <original>S</original>
    <variation>A</variation>
    <location>
        <position position="454"/>
    </location>
</feature>
<feature type="mutagenesis site" description="Impairs phosphoinositide-stimulated phospholipase A2 activity." evidence="10">
    <original>K</original>
    <variation>E</variation>
    <location>
        <position position="488"/>
    </location>
</feature>
<feature type="mutagenesis site" description="Decreases agonist-stimulated release of arachidonic acid. Reduces phospholipase A2 activity; when associated with A-437; A-454 and A-727." evidence="10 24">
    <original>S</original>
    <variation>A</variation>
    <location>
        <position position="505"/>
    </location>
</feature>
<feature type="mutagenesis site" description="Impairs phosphoinositide-stimulated phospholipase A2 activity; when associated with A-543 and A-544." evidence="10">
    <original>K</original>
    <variation>A</variation>
    <location>
        <position position="541"/>
    </location>
</feature>
<feature type="mutagenesis site" description="Impairs phosphoinositide-stimulated phospholipase A2 activity.; when associated with A-541 and A-544." evidence="10">
    <original>K</original>
    <variation>A</variation>
    <location>
        <position position="543"/>
    </location>
</feature>
<feature type="mutagenesis site" description="Impairs phosphoinositide-stimulated phospholipase A2 activity.; when associated with A-541 and A-543." evidence="10">
    <original>K</original>
    <variation>A</variation>
    <location>
        <position position="544"/>
    </location>
</feature>
<feature type="mutagenesis site" description="Abolishes phospholipiase activity." evidence="26">
    <original>D</original>
    <variation>A</variation>
    <location>
        <position position="549"/>
    </location>
</feature>
<feature type="mutagenesis site" description="Reduces phospholipase activity 2000-fold." evidence="26">
    <original>D</original>
    <variation>E</variation>
    <location>
        <position position="549"/>
    </location>
</feature>
<feature type="mutagenesis site" description="Reduces phospholipase activity 300-fold." evidence="26">
    <original>D</original>
    <variation>N</variation>
    <location>
        <position position="549"/>
    </location>
</feature>
<feature type="mutagenesis site" description="7-fold reduced phospholipase and lysophospholipase activities. 100-fold reduced phospholipase and lysophospholipase activities; when associated with A-195." evidence="23">
    <original>S</original>
    <variation>A</variation>
    <location>
        <position position="577"/>
    </location>
</feature>
<feature type="mutagenesis site" description="No effect on phospholipase activity; when associated with A-634." evidence="23">
    <original>C</original>
    <variation>A</variation>
    <location>
        <position position="620"/>
    </location>
</feature>
<feature type="mutagenesis site" description="No effect on phospholipase activity; when associated with A-620." evidence="23">
    <original>C</original>
    <variation>A</variation>
    <location>
        <position position="634"/>
    </location>
</feature>
<feature type="mutagenesis site" description="No effect on phospholipase activity." evidence="23">
    <original>C</original>
    <variation>A</variation>
    <location>
        <position position="726"/>
    </location>
</feature>
<feature type="mutagenesis site" description="Reduces phospholipase A2 activity; when associated with A-437; A-455 and A-505." evidence="10">
    <original>S</original>
    <variation>A</variation>
    <location>
        <position position="727"/>
    </location>
</feature>
<feature type="strand" evidence="50">
    <location>
        <begin position="18"/>
        <end position="29"/>
    </location>
</feature>
<feature type="helix" evidence="50">
    <location>
        <begin position="34"/>
        <end position="39"/>
    </location>
</feature>
<feature type="strand" evidence="50">
    <location>
        <begin position="44"/>
        <end position="49"/>
    </location>
</feature>
<feature type="strand" evidence="48">
    <location>
        <begin position="51"/>
        <end position="54"/>
    </location>
</feature>
<feature type="strand" evidence="48">
    <location>
        <begin position="57"/>
        <end position="60"/>
    </location>
</feature>
<feature type="strand" evidence="50">
    <location>
        <begin position="70"/>
        <end position="79"/>
    </location>
</feature>
<feature type="strand" evidence="50">
    <location>
        <begin position="86"/>
        <end position="93"/>
    </location>
</feature>
<feature type="strand" evidence="49">
    <location>
        <begin position="96"/>
        <end position="98"/>
    </location>
</feature>
<feature type="strand" evidence="50">
    <location>
        <begin position="100"/>
        <end position="108"/>
    </location>
</feature>
<feature type="helix" evidence="50">
    <location>
        <begin position="109"/>
        <end position="111"/>
    </location>
</feature>
<feature type="strand" evidence="50">
    <location>
        <begin position="117"/>
        <end position="124"/>
    </location>
</feature>
<feature type="turn" evidence="50">
    <location>
        <begin position="125"/>
        <end position="127"/>
    </location>
</feature>
<feature type="strand" evidence="50">
    <location>
        <begin position="128"/>
        <end position="137"/>
    </location>
</feature>
<feature type="strand" evidence="49">
    <location>
        <begin position="143"/>
        <end position="146"/>
    </location>
</feature>
<feature type="helix" evidence="49">
    <location>
        <begin position="152"/>
        <end position="177"/>
    </location>
</feature>
<feature type="helix" evidence="49">
    <location>
        <begin position="179"/>
        <end position="181"/>
    </location>
</feature>
<feature type="strand" evidence="49">
    <location>
        <begin position="190"/>
        <end position="194"/>
    </location>
</feature>
<feature type="helix" evidence="49">
    <location>
        <begin position="198"/>
        <end position="214"/>
    </location>
</feature>
<feature type="helix" evidence="49">
    <location>
        <begin position="218"/>
        <end position="220"/>
    </location>
</feature>
<feature type="strand" evidence="49">
    <location>
        <begin position="221"/>
        <end position="226"/>
    </location>
</feature>
<feature type="helix" evidence="49">
    <location>
        <begin position="228"/>
        <end position="239"/>
    </location>
</feature>
<feature type="turn" evidence="49">
    <location>
        <begin position="241"/>
        <end position="245"/>
    </location>
</feature>
<feature type="helix" evidence="49">
    <location>
        <begin position="248"/>
        <end position="260"/>
    </location>
</feature>
<feature type="helix" evidence="49">
    <location>
        <begin position="263"/>
        <end position="266"/>
    </location>
</feature>
<feature type="helix" evidence="49">
    <location>
        <begin position="269"/>
        <end position="284"/>
    </location>
</feature>
<feature type="helix" evidence="49">
    <location>
        <begin position="291"/>
        <end position="304"/>
    </location>
</feature>
<feature type="helix" evidence="49">
    <location>
        <begin position="305"/>
        <end position="307"/>
    </location>
</feature>
<feature type="helix" evidence="49">
    <location>
        <begin position="313"/>
        <end position="318"/>
    </location>
</feature>
<feature type="turn" evidence="49">
    <location>
        <begin position="319"/>
        <end position="321"/>
    </location>
</feature>
<feature type="strand" evidence="49">
    <location>
        <begin position="326"/>
        <end position="333"/>
    </location>
</feature>
<feature type="helix" evidence="49">
    <location>
        <begin position="341"/>
        <end position="343"/>
    </location>
</feature>
<feature type="strand" evidence="49">
    <location>
        <begin position="344"/>
        <end position="349"/>
    </location>
</feature>
<feature type="strand" evidence="49">
    <location>
        <begin position="354"/>
        <end position="356"/>
    </location>
</feature>
<feature type="turn" evidence="49">
    <location>
        <begin position="357"/>
        <end position="360"/>
    </location>
</feature>
<feature type="strand" evidence="49">
    <location>
        <begin position="361"/>
        <end position="363"/>
    </location>
</feature>
<feature type="helix" evidence="49">
    <location>
        <begin position="365"/>
        <end position="367"/>
    </location>
</feature>
<feature type="strand" evidence="49">
    <location>
        <begin position="370"/>
        <end position="373"/>
    </location>
</feature>
<feature type="strand" evidence="49">
    <location>
        <begin position="376"/>
        <end position="379"/>
    </location>
</feature>
<feature type="helix" evidence="49">
    <location>
        <begin position="386"/>
        <end position="393"/>
    </location>
</feature>
<feature type="helix" evidence="49">
    <location>
        <begin position="396"/>
        <end position="399"/>
    </location>
</feature>
<feature type="helix" evidence="49">
    <location>
        <begin position="401"/>
        <end position="404"/>
    </location>
</feature>
<feature type="helix" evidence="49">
    <location>
        <begin position="417"/>
        <end position="423"/>
    </location>
</feature>
<feature type="helix" evidence="49">
    <location>
        <begin position="426"/>
        <end position="429"/>
    </location>
</feature>
<feature type="helix" evidence="49">
    <location>
        <begin position="463"/>
        <end position="476"/>
    </location>
</feature>
<feature type="strand" evidence="49">
    <location>
        <begin position="488"/>
        <end position="490"/>
    </location>
</feature>
<feature type="turn" evidence="49">
    <location>
        <begin position="492"/>
        <end position="495"/>
    </location>
</feature>
<feature type="strand" evidence="49">
    <location>
        <begin position="543"/>
        <end position="548"/>
    </location>
</feature>
<feature type="helix" evidence="49">
    <location>
        <begin position="550"/>
        <end position="552"/>
    </location>
</feature>
<feature type="helix" evidence="49">
    <location>
        <begin position="558"/>
        <end position="561"/>
    </location>
</feature>
<feature type="helix" evidence="49">
    <location>
        <begin position="564"/>
        <end position="566"/>
    </location>
</feature>
<feature type="strand" evidence="49">
    <location>
        <begin position="570"/>
        <end position="575"/>
    </location>
</feature>
<feature type="helix" evidence="49">
    <location>
        <begin position="588"/>
        <end position="599"/>
    </location>
</feature>
<feature type="helix" evidence="49">
    <location>
        <begin position="611"/>
        <end position="615"/>
    </location>
</feature>
<feature type="strand" evidence="49">
    <location>
        <begin position="619"/>
        <end position="623"/>
    </location>
</feature>
<feature type="strand" evidence="49">
    <location>
        <begin position="636"/>
        <end position="641"/>
    </location>
</feature>
<feature type="helix" evidence="49">
    <location>
        <begin position="646"/>
        <end position="648"/>
    </location>
</feature>
<feature type="strand" evidence="49">
    <location>
        <begin position="650"/>
        <end position="652"/>
    </location>
</feature>
<feature type="helix" evidence="49">
    <location>
        <begin position="660"/>
        <end position="666"/>
    </location>
</feature>
<feature type="strand" evidence="49">
    <location>
        <begin position="670"/>
        <end position="672"/>
    </location>
</feature>
<feature type="helix" evidence="49">
    <location>
        <begin position="687"/>
        <end position="702"/>
    </location>
</feature>
<feature type="helix" evidence="49">
    <location>
        <begin position="705"/>
        <end position="718"/>
    </location>
</feature>
<comment type="function">
    <text evidence="1 7 10 11 13 15 16 21 22 25 26 27">Has primarily calcium-dependent phospholipase and lysophospholipase activities, with a major role in membrane lipid remodeling and biosynthesis of lipid mediators of the inflammatory response (PubMed:10358058, PubMed:14709560, PubMed:16617059, PubMed:17472963, PubMed:18451993, PubMed:27642067, PubMed:7794891, PubMed:8619991, PubMed:8702602, PubMed:9425121). Plays an important role in embryo implantation and parturition through its ability to trigger prostanoid production (By similarity). Preferentially hydrolyzes the ester bond of the fatty acyl group attached at sn-2 position of phospholipids (phospholipase A2 activity) (PubMed:10358058, PubMed:17472963, PubMed:18451993, PubMed:7794891, PubMed:8619991, PubMed:9425121). Selectively hydrolyzes sn-2 arachidonoyl group from membrane phospholipids, providing the precursor for eicosanoid biosynthesis via the cyclooxygenase pathway (PubMed:10358058, PubMed:17472963, PubMed:18451993, PubMed:7794891, PubMed:9425121). In an alternative pathway of eicosanoid biosynthesis, hydrolyzes sn-2 fatty acyl chain of eicosanoid lysophopholipids to release free bioactive eicosanoids (PubMed:27642067). Hydrolyzes the ester bond of the fatty acyl group attached at sn-1 position of phospholipids (phospholipase A1 activity) only if an ether linkage rather than an ester linkage is present at the sn-2 position. This hydrolysis is not stereospecific (PubMed:7794891). Has calcium-independent phospholipase A2 and lysophospholipase activities in the presence of phosphoinositides (PubMed:12672805). Has O-acyltransferase activity. Catalyzes the transfer of fatty acyl chains from phospholipids to a primary hydroxyl group of glycerol (sn-1 or sn-3), potentially contributing to monoacylglycerol synthesis (PubMed:7794891).</text>
</comment>
<comment type="catalytic activity">
    <reaction evidence="7 10 11 13 15 16 22 25 26">
        <text>a 1,2-diacyl-sn-glycero-3-phosphocholine + H2O = a 1-acyl-sn-glycero-3-phosphocholine + a fatty acid + H(+)</text>
        <dbReference type="Rhea" id="RHEA:15801"/>
        <dbReference type="ChEBI" id="CHEBI:15377"/>
        <dbReference type="ChEBI" id="CHEBI:15378"/>
        <dbReference type="ChEBI" id="CHEBI:28868"/>
        <dbReference type="ChEBI" id="CHEBI:57643"/>
        <dbReference type="ChEBI" id="CHEBI:58168"/>
        <dbReference type="EC" id="3.1.1.4"/>
    </reaction>
    <physiologicalReaction direction="left-to-right" evidence="38">
        <dbReference type="Rhea" id="RHEA:15802"/>
    </physiologicalReaction>
</comment>
<comment type="catalytic activity">
    <reaction evidence="7 22">
        <text>a 1-O-alkyl-2-acyl-sn-glycero-3-phosphocholine + H2O = a 1-O-alkyl-sn-glycero-3-phosphocholine + a fatty acid + H(+)</text>
        <dbReference type="Rhea" id="RHEA:36231"/>
        <dbReference type="ChEBI" id="CHEBI:15377"/>
        <dbReference type="ChEBI" id="CHEBI:15378"/>
        <dbReference type="ChEBI" id="CHEBI:28868"/>
        <dbReference type="ChEBI" id="CHEBI:30909"/>
        <dbReference type="ChEBI" id="CHEBI:36702"/>
        <dbReference type="EC" id="3.1.1.4"/>
    </reaction>
    <physiologicalReaction direction="left-to-right" evidence="33 40">
        <dbReference type="Rhea" id="RHEA:36232"/>
    </physiologicalReaction>
</comment>
<comment type="catalytic activity">
    <reaction evidence="10 13">
        <text>a 1-acyl-sn-glycero-3-phosphocholine + H2O = sn-glycerol 3-phosphocholine + a fatty acid + H(+)</text>
        <dbReference type="Rhea" id="RHEA:15177"/>
        <dbReference type="ChEBI" id="CHEBI:15377"/>
        <dbReference type="ChEBI" id="CHEBI:15378"/>
        <dbReference type="ChEBI" id="CHEBI:16870"/>
        <dbReference type="ChEBI" id="CHEBI:28868"/>
        <dbReference type="ChEBI" id="CHEBI:58168"/>
        <dbReference type="EC" id="3.1.1.5"/>
    </reaction>
    <physiologicalReaction direction="left-to-right" evidence="34 36">
        <dbReference type="Rhea" id="RHEA:15178"/>
    </physiologicalReaction>
</comment>
<comment type="catalytic activity">
    <reaction evidence="7 10 11 13 15 22">
        <text>1-hexadecanoyl-2-(5Z,8Z,11Z,14Z-eicosatetraenoyl)-sn-glycero-3-phosphocholine + H2O = 1-hexadecanoyl-sn-glycero-3-phosphocholine + (5Z,8Z,11Z,14Z)-eicosatetraenoate + H(+)</text>
        <dbReference type="Rhea" id="RHEA:40427"/>
        <dbReference type="ChEBI" id="CHEBI:15377"/>
        <dbReference type="ChEBI" id="CHEBI:15378"/>
        <dbReference type="ChEBI" id="CHEBI:32395"/>
        <dbReference type="ChEBI" id="CHEBI:72998"/>
        <dbReference type="ChEBI" id="CHEBI:73003"/>
    </reaction>
    <physiologicalReaction direction="left-to-right" evidence="34 37 40">
        <dbReference type="Rhea" id="RHEA:40428"/>
    </physiologicalReaction>
</comment>
<comment type="catalytic activity">
    <reaction evidence="22">
        <text>1,2-di-(5Z,8Z,11Z,14Z-eicosatetraenoyl)-sn-glycero-3-phosphocholine + H2O = 1-(5Z,8Z,11Z,14Z-eicosatetraenoyl)-sn-glycero-3-phosphocholine + (5Z,8Z,11Z,14Z)-eicosatetraenoate + H(+)</text>
        <dbReference type="Rhea" id="RHEA:41075"/>
        <dbReference type="ChEBI" id="CHEBI:15377"/>
        <dbReference type="ChEBI" id="CHEBI:15378"/>
        <dbReference type="ChEBI" id="CHEBI:32395"/>
        <dbReference type="ChEBI" id="CHEBI:60657"/>
        <dbReference type="ChEBI" id="CHEBI:74344"/>
    </reaction>
    <physiologicalReaction direction="left-to-right" evidence="40">
        <dbReference type="Rhea" id="RHEA:41076"/>
    </physiologicalReaction>
</comment>
<comment type="catalytic activity">
    <reaction evidence="16 22 27">
        <text>1-octadecanoyl-2-(5Z,8Z,11Z,14Z-eicosatetraenoyl)-sn-glycero-3-phosphocholine + H2O = 1-octadecanoyl-sn-glycero-3-phosphocholine + (5Z,8Z,11Z,14Z)-eicosatetraenoate + H(+)</text>
        <dbReference type="Rhea" id="RHEA:40519"/>
        <dbReference type="ChEBI" id="CHEBI:15377"/>
        <dbReference type="ChEBI" id="CHEBI:15378"/>
        <dbReference type="ChEBI" id="CHEBI:32395"/>
        <dbReference type="ChEBI" id="CHEBI:73858"/>
        <dbReference type="ChEBI" id="CHEBI:74965"/>
    </reaction>
    <physiologicalReaction direction="left-to-right" evidence="38">
        <dbReference type="Rhea" id="RHEA:40520"/>
    </physiologicalReaction>
</comment>
<comment type="catalytic activity">
    <reaction evidence="11">
        <text>1-hexadecanoyl-2-(9Z,12Z-octadecadienoyl)-sn-glycero-3-phosphocholine + H2O = (9Z,12Z)-octadecadienoate + 1-hexadecanoyl-sn-glycero-3-phosphocholine + H(+)</text>
        <dbReference type="Rhea" id="RHEA:40811"/>
        <dbReference type="ChEBI" id="CHEBI:15377"/>
        <dbReference type="ChEBI" id="CHEBI:15378"/>
        <dbReference type="ChEBI" id="CHEBI:30245"/>
        <dbReference type="ChEBI" id="CHEBI:72998"/>
        <dbReference type="ChEBI" id="CHEBI:73002"/>
    </reaction>
    <physiologicalReaction direction="left-to-right" evidence="35">
        <dbReference type="Rhea" id="RHEA:40812"/>
    </physiologicalReaction>
</comment>
<comment type="catalytic activity">
    <reaction evidence="22">
        <text>1-octadecanoyl-2-(9Z,12Z,15Z-octadecatrienoyl)-sn-glycero-3-phosphocholine + H2O = (9Z,12Z,15Z)-octadecatrienoate + 1-octadecanoyl-sn-glycero-3-phosphocholine + H(+)</text>
        <dbReference type="Rhea" id="RHEA:41307"/>
        <dbReference type="ChEBI" id="CHEBI:15377"/>
        <dbReference type="ChEBI" id="CHEBI:15378"/>
        <dbReference type="ChEBI" id="CHEBI:32387"/>
        <dbReference type="ChEBI" id="CHEBI:73858"/>
        <dbReference type="ChEBI" id="CHEBI:78022"/>
    </reaction>
    <physiologicalReaction direction="left-to-right" evidence="40">
        <dbReference type="Rhea" id="RHEA:41308"/>
    </physiologicalReaction>
</comment>
<comment type="catalytic activity">
    <reaction evidence="22">
        <text>1-(5Z,8Z,11Z,14Z-eicosatetraenoyl)-2-hexadecanoyl-sn-glycero-3-phosphocholine + H2O = 1-(5Z,8Z,11Z,14Z-eicosatetraenoyl)-sn-glycero-3-phosphocholine + hexadecanoate + H(+)</text>
        <dbReference type="Rhea" id="RHEA:41071"/>
        <dbReference type="ChEBI" id="CHEBI:7896"/>
        <dbReference type="ChEBI" id="CHEBI:15377"/>
        <dbReference type="ChEBI" id="CHEBI:15378"/>
        <dbReference type="ChEBI" id="CHEBI:74344"/>
        <dbReference type="ChEBI" id="CHEBI:77694"/>
    </reaction>
    <physiologicalReaction direction="left-to-right" evidence="40">
        <dbReference type="Rhea" id="RHEA:41072"/>
    </physiologicalReaction>
</comment>
<comment type="catalytic activity">
    <reaction evidence="7 22">
        <text>1-O-hexadecyl-2-(5Z,8Z,11Z,14Z)-eicosatetraenoyl-sn-glycero-3-phosphocholine + H2O = 1-O-hexadecyl-sn-glycero-3-phosphocholine + (5Z,8Z,11Z,14Z)-eicosatetraenoate + H(+)</text>
        <dbReference type="Rhea" id="RHEA:41067"/>
        <dbReference type="ChEBI" id="CHEBI:15377"/>
        <dbReference type="ChEBI" id="CHEBI:15378"/>
        <dbReference type="ChEBI" id="CHEBI:32395"/>
        <dbReference type="ChEBI" id="CHEBI:55430"/>
        <dbReference type="ChEBI" id="CHEBI:64496"/>
    </reaction>
    <physiologicalReaction direction="left-to-right" evidence="33 40">
        <dbReference type="Rhea" id="RHEA:41068"/>
    </physiologicalReaction>
</comment>
<comment type="catalytic activity">
    <reaction evidence="27">
        <text>1,2-di-(9Z-octadecenoyl)-sn-glycero-3-phospho-(1'-sn-glycerol) + H2O = 1-(9Z-octadecenoyl)-sn-glycero-3-phospho-(1'-sn-glycerol) + (9Z)-octadecenoate + H(+)</text>
        <dbReference type="Rhea" id="RHEA:41123"/>
        <dbReference type="ChEBI" id="CHEBI:15377"/>
        <dbReference type="ChEBI" id="CHEBI:15378"/>
        <dbReference type="ChEBI" id="CHEBI:30823"/>
        <dbReference type="ChEBI" id="CHEBI:72828"/>
        <dbReference type="ChEBI" id="CHEBI:75163"/>
    </reaction>
    <physiologicalReaction direction="left-to-right" evidence="41">
        <dbReference type="Rhea" id="RHEA:41124"/>
    </physiologicalReaction>
</comment>
<comment type="catalytic activity">
    <reaction evidence="27">
        <text>1-octadecanoyl-2-(5Z,8Z,11Z,14Z-eicosatetraenoyl)-sn-glycero-3-phosphate + H2O = 1-octadecanoyl-sn-glycero-3-phosphate + (5Z,8Z,11Z,14Z)-eicosatetraenoate + H(+)</text>
        <dbReference type="Rhea" id="RHEA:40451"/>
        <dbReference type="ChEBI" id="CHEBI:15377"/>
        <dbReference type="ChEBI" id="CHEBI:15378"/>
        <dbReference type="ChEBI" id="CHEBI:32395"/>
        <dbReference type="ChEBI" id="CHEBI:74565"/>
        <dbReference type="ChEBI" id="CHEBI:77091"/>
    </reaction>
    <physiologicalReaction direction="left-to-right" evidence="41">
        <dbReference type="Rhea" id="RHEA:40452"/>
    </physiologicalReaction>
</comment>
<comment type="catalytic activity">
    <reaction evidence="10 13">
        <text>1-hexadecanoyl-sn-glycero-3-phosphocholine + H2O = sn-glycerol 3-phosphocholine + hexadecanoate + H(+)</text>
        <dbReference type="Rhea" id="RHEA:40435"/>
        <dbReference type="ChEBI" id="CHEBI:7896"/>
        <dbReference type="ChEBI" id="CHEBI:15377"/>
        <dbReference type="ChEBI" id="CHEBI:15378"/>
        <dbReference type="ChEBI" id="CHEBI:16870"/>
        <dbReference type="ChEBI" id="CHEBI:72998"/>
    </reaction>
    <physiologicalReaction direction="left-to-right" evidence="34 36">
        <dbReference type="Rhea" id="RHEA:40436"/>
    </physiologicalReaction>
</comment>
<comment type="catalytic activity">
    <reaction evidence="21">
        <text>2-(prostaglandin E2)-sn-glycero-3-phosphoethanolamine + H2O = sn-glycero-3-phosphoethanolamine + prostaglandin E2 + H(+)</text>
        <dbReference type="Rhea" id="RHEA:53704"/>
        <dbReference type="ChEBI" id="CHEBI:15377"/>
        <dbReference type="ChEBI" id="CHEBI:15378"/>
        <dbReference type="ChEBI" id="CHEBI:137581"/>
        <dbReference type="ChEBI" id="CHEBI:143890"/>
        <dbReference type="ChEBI" id="CHEBI:606564"/>
    </reaction>
    <physiologicalReaction direction="left-to-right" evidence="39">
        <dbReference type="Rhea" id="RHEA:53705"/>
    </physiologicalReaction>
</comment>
<comment type="catalytic activity">
    <reaction evidence="21">
        <text>2-[(15S)-hydroxy-(5Z,8Z,11Z,13E)-eicosatetraenoyl]-sn-glycero-3-phosphocholine + H2O = (15S)-hydroxy-(5Z,8Z,11Z,13E)-eicosatetraenoate + sn-glycerol 3-phosphocholine + H(+)</text>
        <dbReference type="Rhea" id="RHEA:53700"/>
        <dbReference type="ChEBI" id="CHEBI:15377"/>
        <dbReference type="ChEBI" id="CHEBI:15378"/>
        <dbReference type="ChEBI" id="CHEBI:16870"/>
        <dbReference type="ChEBI" id="CHEBI:57409"/>
        <dbReference type="ChEBI" id="CHEBI:137584"/>
    </reaction>
    <physiologicalReaction direction="left-to-right" evidence="39">
        <dbReference type="Rhea" id="RHEA:53701"/>
    </physiologicalReaction>
</comment>
<comment type="catalytic activity">
    <reaction evidence="21">
        <text>2-[(15R)-hydroxy-(5Z,8Z,11Z,13E)-eicosatetraenoyl]-sn-glycero-3-phosphocholine + H2O = (15R)-hydroxy-(5Z,8Z,11Z,13E)-eicosatetraenoate + sn-glycerol 3-phosphocholine + H(+)</text>
        <dbReference type="Rhea" id="RHEA:53696"/>
        <dbReference type="ChEBI" id="CHEBI:15377"/>
        <dbReference type="ChEBI" id="CHEBI:15378"/>
        <dbReference type="ChEBI" id="CHEBI:16870"/>
        <dbReference type="ChEBI" id="CHEBI:78837"/>
        <dbReference type="ChEBI" id="CHEBI:137583"/>
    </reaction>
    <physiologicalReaction direction="left-to-right" evidence="39">
        <dbReference type="Rhea" id="RHEA:53697"/>
    </physiologicalReaction>
</comment>
<comment type="catalytic activity">
    <reaction evidence="21">
        <text>2-(prostaglandin E2)-sn-glycero-3-phosphocholine + H2O = prostaglandin E2 + sn-glycerol 3-phosphocholine + H(+)</text>
        <dbReference type="Rhea" id="RHEA:53692"/>
        <dbReference type="ChEBI" id="CHEBI:15377"/>
        <dbReference type="ChEBI" id="CHEBI:15378"/>
        <dbReference type="ChEBI" id="CHEBI:16870"/>
        <dbReference type="ChEBI" id="CHEBI:137585"/>
        <dbReference type="ChEBI" id="CHEBI:606564"/>
    </reaction>
    <physiologicalReaction direction="left-to-right" evidence="39">
        <dbReference type="Rhea" id="RHEA:53693"/>
    </physiologicalReaction>
</comment>
<comment type="catalytic activity">
    <reaction evidence="21">
        <text>2-[(11R)-hydroxy-(5Z,8Z,12E,14Z)-eicosatetraenoyl]-sn-glycero-3-phosphocholine + H2O = (11R)-hydroxy-(5Z,8Z,12E,14Z)-eicosatetraenoate + sn-glycerol 3-phosphocholine + H(+)</text>
        <dbReference type="Rhea" id="RHEA:53688"/>
        <dbReference type="ChEBI" id="CHEBI:15377"/>
        <dbReference type="ChEBI" id="CHEBI:15378"/>
        <dbReference type="ChEBI" id="CHEBI:16870"/>
        <dbReference type="ChEBI" id="CHEBI:78836"/>
        <dbReference type="ChEBI" id="CHEBI:137582"/>
    </reaction>
    <physiologicalReaction direction="left-to-right" evidence="39">
        <dbReference type="Rhea" id="RHEA:53689"/>
    </physiologicalReaction>
</comment>
<comment type="catalytic activity">
    <reaction evidence="22">
        <text>1-(5Z,8Z,11Z,14Z-eicosatetraenoyl)-2-O-hexadecyl-sn-glycero-3-phosphocholine + H2O = 2-O-hexadecyl-sn-glycero-3-phosphocholine + (5Z,8Z,11Z,14Z)-eicosatetraenoate + H(+)</text>
        <dbReference type="Rhea" id="RHEA:41271"/>
        <dbReference type="ChEBI" id="CHEBI:15377"/>
        <dbReference type="ChEBI" id="CHEBI:15378"/>
        <dbReference type="ChEBI" id="CHEBI:32395"/>
        <dbReference type="ChEBI" id="CHEBI:77695"/>
        <dbReference type="ChEBI" id="CHEBI:77696"/>
    </reaction>
    <physiologicalReaction direction="left-to-right" evidence="40">
        <dbReference type="Rhea" id="RHEA:41272"/>
    </physiologicalReaction>
</comment>
<comment type="catalytic activity">
    <reaction evidence="22">
        <text>1-octadecanoyl-2-(5Z,8Z,11Z,14Z-eicosatetraenoyl)-sn-glycero-3-phosphocholine + glycerol = 1-(5Z,8Z,11Z,14Z-eicosatetraenoyl)-glycerol + 1-octadecanoyl-sn-glycero-3-phosphocholine</text>
        <dbReference type="Rhea" id="RHEA:41099"/>
        <dbReference type="ChEBI" id="CHEBI:17754"/>
        <dbReference type="ChEBI" id="CHEBI:73858"/>
        <dbReference type="ChEBI" id="CHEBI:74965"/>
        <dbReference type="ChEBI" id="CHEBI:75612"/>
    </reaction>
    <physiologicalReaction direction="left-to-right" evidence="40">
        <dbReference type="Rhea" id="RHEA:41100"/>
    </physiologicalReaction>
</comment>
<comment type="catalytic activity">
    <reaction evidence="22">
        <text>1-octadecanoyl-2-(9Z,12Z,15Z-octadecatrienoyl)-sn-glycero-3-phosphocholine + glycerol = 1-(9Z,12Z,15Z-octadecatrienoyl)-glycerol + 1-octadecanoyl-sn-glycero-3-phosphocholine</text>
        <dbReference type="Rhea" id="RHEA:41087"/>
        <dbReference type="ChEBI" id="CHEBI:17754"/>
        <dbReference type="ChEBI" id="CHEBI:73858"/>
        <dbReference type="ChEBI" id="CHEBI:75610"/>
        <dbReference type="ChEBI" id="CHEBI:78022"/>
    </reaction>
    <physiologicalReaction direction="left-to-right" evidence="40">
        <dbReference type="Rhea" id="RHEA:41088"/>
    </physiologicalReaction>
</comment>
<comment type="activity regulation">
    <text evidence="10 15 24 27">Activated by cytosolic calcium, which is necessary for binding to membrane lipids (PubMed:12672805). Activated by phosphorylation in response to mitogenic stimuli (PubMed:8381049). Activated by ceramide-1-phosphate. Binding (via C2 domain) to ceramide-1-phosphate increases the affinity for membrane lipids (PubMed:17472963). Can be activated by phosphoinositides in the absence of calcium (PubMed:12672805). Inhibited by ANXA5 in a calcium- and substrate-dependent way (PubMed:9425121).</text>
</comment>
<comment type="biophysicochemical properties">
    <kinetics>
        <Vmax evidence="23">2.7 umol/min/mg enzyme toward 1-hexadecanoyl-2-(5Z,8Z,11Z,14Z-eicosatetraenoyl)-sn-glycero-3-phosphocholine (phospholipase A2 activity)</Vmax>
        <Vmax evidence="23">4.6 umol/min/mg enzyme toward 1-hexadecanoyl-sn-glycero-3-phosphocholine (lysophospholipase activity)</Vmax>
        <Vmax evidence="15">24.5 nmol/min/mg enzyme toward 1-hexadecanoyl-2-(5Z,8Z,11Z,14Z-eicosatetraenoyl)-sn-glycero-3-phosphocholine (phospholipase A2 activity in the absence of ceramide-1-phosphate)</Vmax>
        <Vmax evidence="15">240.5 nmol/min/mg enzyme toward 1-hexadecanoyl-2-(5Z,8Z,11Z,14Z-eicosatetraenoyl)-sn-glycero-3-phosphocholine (phospholipase A2 activity, in the presence of ceramide-1-phosphate)</Vmax>
    </kinetics>
</comment>
<comment type="pathway">
    <text evidence="1">Membrane lipid metabolism; glycerophospholipid metabolism.</text>
</comment>
<comment type="pathway">
    <text evidence="16">Lipid metabolism; arachidonate metabolism.</text>
</comment>
<comment type="pathway">
    <text evidence="16">Lipid metabolism; prostaglandin biosynthesis.</text>
</comment>
<comment type="pathway">
    <text evidence="16">Lipid metabolism; leukotriene B4 biosynthesis.</text>
</comment>
<comment type="subunit">
    <text evidence="6 9 28 30">Interacts with KAT5.</text>
</comment>
<comment type="subcellular location">
    <subcellularLocation>
        <location evidence="8">Cytoplasm</location>
    </subcellularLocation>
    <subcellularLocation>
        <location evidence="8">Golgi apparatus membrane</location>
    </subcellularLocation>
    <subcellularLocation>
        <location>Nucleus envelope</location>
    </subcellularLocation>
    <text evidence="8">Translocates to intracellular membranes in a calcium-dependent way.</text>
</comment>
<comment type="tissue specificity">
    <text evidence="20">Expressed in various cells and tissues such as macrophages, neutrophils, fibroblasts and lung endothelium. Expressed in platelets (at protein level) (PubMed:25102815).</text>
</comment>
<comment type="domain">
    <text evidence="8 10 28 30">The N-terminal C2 domain associates with lipid membranes upon calcium binding. It modulates enzyme activity by presenting the active site to its substrate in response to elevations of cytosolic calcium (PubMed:11375391, PubMed:9430701, PubMed:9665851). In the presence of phosphoinositides, regulates phospholipase A2 and lysophospholipase activities in a calcium-independent way (PubMed:12672805).</text>
</comment>
<comment type="PTM">
    <text evidence="24 29">Phosphorylated at both Ser-505 and Ser-727 in response to mitogenic stimuli.</text>
</comment>
<comment type="disease" evidence="16 19 20">
    <disease id="DI-05517">
        <name>Gastrointestinal ulceration, recurrent, with dysfunctional platelets</name>
        <acronym>GURDP</acronym>
        <description>An autosomal recessive disorder characterized by recurrent gastrointestinal mucosal ulcers, gastrointestinal bleeding, chronic anemia, iron deficiency, and abdominal pain. Disease features also include platelet dysfunction, and globally decreased eicosanoid synthesis.</description>
        <dbReference type="MIM" id="618372"/>
    </disease>
    <text>The disease is caused by variants affecting the gene represented in this entry.</text>
</comment>
<comment type="online information" name="Atlas of Genetics and Cytogenetics in Oncology and Haematology">
    <link uri="https://atlasgeneticsoncology.org/gene/41733/PLA2G4A"/>
</comment>
<dbReference type="EC" id="3.1.1.4" evidence="7 10 11 13 15 22"/>
<dbReference type="EC" id="3.1.1.5" evidence="10 13"/>
<dbReference type="EMBL" id="M72393">
    <property type="protein sequence ID" value="AAB00789.1"/>
    <property type="molecule type" value="mRNA"/>
</dbReference>
<dbReference type="EMBL" id="M68874">
    <property type="protein sequence ID" value="AAA60105.1"/>
    <property type="molecule type" value="mRNA"/>
</dbReference>
<dbReference type="EMBL" id="AY552098">
    <property type="protein sequence ID" value="AAS45712.1"/>
    <property type="molecule type" value="Genomic_DNA"/>
</dbReference>
<dbReference type="EMBL" id="AL022147">
    <property type="status" value="NOT_ANNOTATED_CDS"/>
    <property type="molecule type" value="Genomic_DNA"/>
</dbReference>
<dbReference type="EMBL" id="AL049797">
    <property type="status" value="NOT_ANNOTATED_CDS"/>
    <property type="molecule type" value="Genomic_DNA"/>
</dbReference>
<dbReference type="EMBL" id="BC114340">
    <property type="protein sequence ID" value="AAI14341.1"/>
    <property type="molecule type" value="mRNA"/>
</dbReference>
<dbReference type="CCDS" id="CCDS1372.1"/>
<dbReference type="PIR" id="A39329">
    <property type="entry name" value="A39329"/>
</dbReference>
<dbReference type="RefSeq" id="NP_001298122.1">
    <property type="nucleotide sequence ID" value="NM_001311193.1"/>
</dbReference>
<dbReference type="RefSeq" id="NP_077734.2">
    <property type="nucleotide sequence ID" value="NM_024420.3"/>
</dbReference>
<dbReference type="RefSeq" id="XP_011507944.1">
    <property type="nucleotide sequence ID" value="XM_011509642.3"/>
</dbReference>
<dbReference type="PDB" id="1BCI">
    <property type="method" value="NMR"/>
    <property type="chains" value="A=1-138"/>
</dbReference>
<dbReference type="PDB" id="1CJY">
    <property type="method" value="X-ray"/>
    <property type="resolution" value="2.50 A"/>
    <property type="chains" value="A/B=1-749"/>
</dbReference>
<dbReference type="PDB" id="1RLW">
    <property type="method" value="X-ray"/>
    <property type="resolution" value="2.40 A"/>
    <property type="chains" value="A=17-141"/>
</dbReference>
<dbReference type="PDBsum" id="1BCI"/>
<dbReference type="PDBsum" id="1CJY"/>
<dbReference type="PDBsum" id="1RLW"/>
<dbReference type="BMRB" id="P47712"/>
<dbReference type="SMR" id="P47712"/>
<dbReference type="BioGRID" id="111338">
    <property type="interactions" value="61"/>
</dbReference>
<dbReference type="DIP" id="DIP-40991N"/>
<dbReference type="FunCoup" id="P47712">
    <property type="interactions" value="1329"/>
</dbReference>
<dbReference type="IntAct" id="P47712">
    <property type="interactions" value="26"/>
</dbReference>
<dbReference type="MINT" id="P47712"/>
<dbReference type="STRING" id="9606.ENSP00000356436"/>
<dbReference type="BindingDB" id="P47712"/>
<dbReference type="ChEMBL" id="CHEMBL3816"/>
<dbReference type="DrugBank" id="DB00041">
    <property type="generic name" value="Aldesleukin"/>
</dbReference>
<dbReference type="DrugBank" id="DB17022">
    <property type="generic name" value="Arachidonyltrifluoromethane"/>
</dbReference>
<dbReference type="DrugBank" id="DB00411">
    <property type="generic name" value="Carbamoylcholine"/>
</dbReference>
<dbReference type="DrugBank" id="DB00578">
    <property type="generic name" value="Carbenicillin"/>
</dbReference>
<dbReference type="DrugBank" id="DB06311">
    <property type="generic name" value="Darapladib"/>
</dbReference>
<dbReference type="DrugBank" id="DB00445">
    <property type="generic name" value="Epirubicin"/>
</dbReference>
<dbReference type="DrugBank" id="DB13867">
    <property type="generic name" value="Fluticasone"/>
</dbReference>
<dbReference type="DrugBank" id="DB00588">
    <property type="generic name" value="Fluticasone propionate"/>
</dbReference>
<dbReference type="DrugBank" id="DB05029">
    <property type="generic name" value="Lancovutide"/>
</dbReference>
<dbReference type="DrugBank" id="DB04552">
    <property type="generic name" value="Niflumic acid"/>
</dbReference>
<dbReference type="DrugBank" id="DB01083">
    <property type="generic name" value="Orlistat"/>
</dbReference>
<dbReference type="DrugBank" id="DB00721">
    <property type="generic name" value="Procaine"/>
</dbReference>
<dbReference type="DrugBank" id="DB01103">
    <property type="generic name" value="Quinacrine"/>
</dbReference>
<dbReference type="DrugBank" id="DB00086">
    <property type="generic name" value="Streptokinase"/>
</dbReference>
<dbReference type="DrugBank" id="DB04786">
    <property type="generic name" value="Suramin"/>
</dbReference>
<dbReference type="DrugBank" id="DB04827">
    <property type="generic name" value="Urethane"/>
</dbReference>
<dbReference type="DrugCentral" id="P47712"/>
<dbReference type="GuidetoPHARMACOLOGY" id="1424"/>
<dbReference type="SwissLipids" id="SLP:000000565"/>
<dbReference type="GlyGen" id="P47712">
    <property type="glycosylation" value="3 sites, 1 O-linked glycan (3 sites)"/>
</dbReference>
<dbReference type="iPTMnet" id="P47712"/>
<dbReference type="MetOSite" id="P47712"/>
<dbReference type="PhosphoSitePlus" id="P47712"/>
<dbReference type="BioMuta" id="PLA2G4A"/>
<dbReference type="DMDM" id="317373312"/>
<dbReference type="jPOST" id="P47712"/>
<dbReference type="MassIVE" id="P47712"/>
<dbReference type="PaxDb" id="9606-ENSP00000356436"/>
<dbReference type="PeptideAtlas" id="P47712"/>
<dbReference type="ProteomicsDB" id="55788"/>
<dbReference type="Pumba" id="P47712"/>
<dbReference type="Antibodypedia" id="4104">
    <property type="antibodies" value="411 antibodies from 38 providers"/>
</dbReference>
<dbReference type="DNASU" id="5321"/>
<dbReference type="Ensembl" id="ENST00000367466.4">
    <property type="protein sequence ID" value="ENSP00000356436.3"/>
    <property type="gene ID" value="ENSG00000116711.10"/>
</dbReference>
<dbReference type="GeneID" id="5321"/>
<dbReference type="KEGG" id="hsa:5321"/>
<dbReference type="MANE-Select" id="ENST00000367466.4">
    <property type="protein sequence ID" value="ENSP00000356436.3"/>
    <property type="RefSeq nucleotide sequence ID" value="NM_024420.3"/>
    <property type="RefSeq protein sequence ID" value="NP_077734.2"/>
</dbReference>
<dbReference type="UCSC" id="uc001gsc.4">
    <property type="organism name" value="human"/>
</dbReference>
<dbReference type="AGR" id="HGNC:9035"/>
<dbReference type="CTD" id="5321"/>
<dbReference type="DisGeNET" id="5321"/>
<dbReference type="GeneCards" id="PLA2G4A"/>
<dbReference type="HGNC" id="HGNC:9035">
    <property type="gene designation" value="PLA2G4A"/>
</dbReference>
<dbReference type="HPA" id="ENSG00000116711">
    <property type="expression patterns" value="Tissue enhanced (parathyroid gland, seminal vesicle)"/>
</dbReference>
<dbReference type="MalaCards" id="PLA2G4A"/>
<dbReference type="MIM" id="600522">
    <property type="type" value="gene"/>
</dbReference>
<dbReference type="MIM" id="618372">
    <property type="type" value="phenotype"/>
</dbReference>
<dbReference type="neXtProt" id="NX_P47712"/>
<dbReference type="OpenTargets" id="ENSG00000116711"/>
<dbReference type="Orphanet" id="468635">
    <property type="disease" value="Cryptogenic multifocal ulcerous stenosing enteritis"/>
</dbReference>
<dbReference type="Orphanet" id="477787">
    <property type="disease" value="Cytosolic phospholipase-A2 alpha deficiency associated bleeding disorder"/>
</dbReference>
<dbReference type="PharmGKB" id="PA271"/>
<dbReference type="VEuPathDB" id="HostDB:ENSG00000116711"/>
<dbReference type="eggNOG" id="KOG1012">
    <property type="taxonomic scope" value="Eukaryota"/>
</dbReference>
<dbReference type="eggNOG" id="KOG1325">
    <property type="taxonomic scope" value="Eukaryota"/>
</dbReference>
<dbReference type="GeneTree" id="ENSGT01030000234606"/>
<dbReference type="HOGENOM" id="CLU_011663_1_1_1"/>
<dbReference type="InParanoid" id="P47712"/>
<dbReference type="OMA" id="NQESWVQ"/>
<dbReference type="OrthoDB" id="419768at2759"/>
<dbReference type="PAN-GO" id="P47712">
    <property type="GO annotations" value="8 GO annotations based on evolutionary models"/>
</dbReference>
<dbReference type="PhylomeDB" id="P47712"/>
<dbReference type="TreeFam" id="TF325228"/>
<dbReference type="BioCyc" id="MetaCyc:HS04039-MONOMER"/>
<dbReference type="BRENDA" id="3.1.1.4">
    <property type="organism ID" value="2681"/>
</dbReference>
<dbReference type="PathwayCommons" id="P47712"/>
<dbReference type="Reactome" id="R-HSA-111995">
    <property type="pathway name" value="phospho-PLA2 pathway"/>
</dbReference>
<dbReference type="Reactome" id="R-HSA-1482788">
    <property type="pathway name" value="Acyl chain remodelling of PC"/>
</dbReference>
<dbReference type="Reactome" id="R-HSA-1482798">
    <property type="pathway name" value="Acyl chain remodeling of CL"/>
</dbReference>
<dbReference type="Reactome" id="R-HSA-1482801">
    <property type="pathway name" value="Acyl chain remodelling of PS"/>
</dbReference>
<dbReference type="Reactome" id="R-HSA-1482839">
    <property type="pathway name" value="Acyl chain remodelling of PE"/>
</dbReference>
<dbReference type="Reactome" id="R-HSA-1482922">
    <property type="pathway name" value="Acyl chain remodelling of PI"/>
</dbReference>
<dbReference type="Reactome" id="R-HSA-1482925">
    <property type="pathway name" value="Acyl chain remodelling of PG"/>
</dbReference>
<dbReference type="Reactome" id="R-HSA-1483115">
    <property type="pathway name" value="Hydrolysis of LPC"/>
</dbReference>
<dbReference type="Reactome" id="R-HSA-1483166">
    <property type="pathway name" value="Synthesis of PA"/>
</dbReference>
<dbReference type="Reactome" id="R-HSA-2142753">
    <property type="pathway name" value="Arachidonate metabolism"/>
</dbReference>
<dbReference type="Reactome" id="R-HSA-418592">
    <property type="pathway name" value="ADP signalling through P2Y purinoceptor 1"/>
</dbReference>
<dbReference type="Reactome" id="R-HSA-432142">
    <property type="pathway name" value="Platelet sensitization by LDL"/>
</dbReference>
<dbReference type="Reactome" id="R-HSA-6811436">
    <property type="pathway name" value="COPI-independent Golgi-to-ER retrograde traffic"/>
</dbReference>
<dbReference type="SignaLink" id="P47712"/>
<dbReference type="SIGNOR" id="P47712"/>
<dbReference type="UniPathway" id="UPA00383"/>
<dbReference type="UniPathway" id="UPA00662"/>
<dbReference type="UniPathway" id="UPA00878"/>
<dbReference type="UniPathway" id="UPA00940"/>
<dbReference type="BioGRID-ORCS" id="5321">
    <property type="hits" value="12 hits in 1163 CRISPR screens"/>
</dbReference>
<dbReference type="ChiTaRS" id="PLA2G4A">
    <property type="organism name" value="human"/>
</dbReference>
<dbReference type="EvolutionaryTrace" id="P47712"/>
<dbReference type="GeneWiki" id="PLA2G4A"/>
<dbReference type="GenomeRNAi" id="5321"/>
<dbReference type="Pharos" id="P47712">
    <property type="development level" value="Tchem"/>
</dbReference>
<dbReference type="PRO" id="PR:P47712"/>
<dbReference type="Proteomes" id="UP000005640">
    <property type="component" value="Chromosome 1"/>
</dbReference>
<dbReference type="RNAct" id="P47712">
    <property type="molecule type" value="protein"/>
</dbReference>
<dbReference type="Bgee" id="ENSG00000116711">
    <property type="expression patterns" value="Expressed in seminal vesicle and 173 other cell types or tissues"/>
</dbReference>
<dbReference type="GO" id="GO:0005737">
    <property type="term" value="C:cytoplasm"/>
    <property type="evidence" value="ECO:0000314"/>
    <property type="project" value="UniProtKB"/>
</dbReference>
<dbReference type="GO" id="GO:0005829">
    <property type="term" value="C:cytosol"/>
    <property type="evidence" value="ECO:0000314"/>
    <property type="project" value="HPA"/>
</dbReference>
<dbReference type="GO" id="GO:0005783">
    <property type="term" value="C:endoplasmic reticulum"/>
    <property type="evidence" value="ECO:0000318"/>
    <property type="project" value="GO_Central"/>
</dbReference>
<dbReference type="GO" id="GO:0005789">
    <property type="term" value="C:endoplasmic reticulum membrane"/>
    <property type="evidence" value="ECO:0000304"/>
    <property type="project" value="Reactome"/>
</dbReference>
<dbReference type="GO" id="GO:0005794">
    <property type="term" value="C:Golgi apparatus"/>
    <property type="evidence" value="ECO:0000318"/>
    <property type="project" value="GO_Central"/>
</dbReference>
<dbReference type="GO" id="GO:0000139">
    <property type="term" value="C:Golgi membrane"/>
    <property type="evidence" value="ECO:0000314"/>
    <property type="project" value="UniProtKB"/>
</dbReference>
<dbReference type="GO" id="GO:0043231">
    <property type="term" value="C:intracellular membrane-bounded organelle"/>
    <property type="evidence" value="ECO:0000314"/>
    <property type="project" value="HPA"/>
</dbReference>
<dbReference type="GO" id="GO:0005743">
    <property type="term" value="C:mitochondrial inner membrane"/>
    <property type="evidence" value="ECO:0000304"/>
    <property type="project" value="Reactome"/>
</dbReference>
<dbReference type="GO" id="GO:0005635">
    <property type="term" value="C:nuclear envelope"/>
    <property type="evidence" value="ECO:0000314"/>
    <property type="project" value="UniProtKB"/>
</dbReference>
<dbReference type="GO" id="GO:0005634">
    <property type="term" value="C:nucleus"/>
    <property type="evidence" value="ECO:0000318"/>
    <property type="project" value="GO_Central"/>
</dbReference>
<dbReference type="GO" id="GO:0005509">
    <property type="term" value="F:calcium ion binding"/>
    <property type="evidence" value="ECO:0000314"/>
    <property type="project" value="UniProtKB"/>
</dbReference>
<dbReference type="GO" id="GO:0047498">
    <property type="term" value="F:calcium-dependent phospholipase A2 activity"/>
    <property type="evidence" value="ECO:0000314"/>
    <property type="project" value="UniProtKB"/>
</dbReference>
<dbReference type="GO" id="GO:0005544">
    <property type="term" value="F:calcium-dependent phospholipid binding"/>
    <property type="evidence" value="ECO:0000314"/>
    <property type="project" value="UniProtKB"/>
</dbReference>
<dbReference type="GO" id="GO:0047499">
    <property type="term" value="F:calcium-independent phospholipase A2 activity"/>
    <property type="evidence" value="ECO:0000314"/>
    <property type="project" value="UniProtKB"/>
</dbReference>
<dbReference type="GO" id="GO:1902387">
    <property type="term" value="F:ceramide 1-phosphate binding"/>
    <property type="evidence" value="ECO:0000314"/>
    <property type="project" value="UniProtKB"/>
</dbReference>
<dbReference type="GO" id="GO:0004622">
    <property type="term" value="F:lysophospholipase activity"/>
    <property type="evidence" value="ECO:0000314"/>
    <property type="project" value="UniProtKB"/>
</dbReference>
<dbReference type="GO" id="GO:0008374">
    <property type="term" value="F:O-acyltransferase activity"/>
    <property type="evidence" value="ECO:0000314"/>
    <property type="project" value="UniProtKB"/>
</dbReference>
<dbReference type="GO" id="GO:0032266">
    <property type="term" value="F:phosphatidylinositol-3-phosphate binding"/>
    <property type="evidence" value="ECO:0000314"/>
    <property type="project" value="UniProtKB"/>
</dbReference>
<dbReference type="GO" id="GO:0070273">
    <property type="term" value="F:phosphatidylinositol-4-phosphate binding"/>
    <property type="evidence" value="ECO:0000314"/>
    <property type="project" value="UniProtKB"/>
</dbReference>
<dbReference type="GO" id="GO:0010314">
    <property type="term" value="F:phosphatidylinositol-5-phosphate binding"/>
    <property type="evidence" value="ECO:0000314"/>
    <property type="project" value="UniProtKB"/>
</dbReference>
<dbReference type="GO" id="GO:0004623">
    <property type="term" value="F:phospholipase A2 activity"/>
    <property type="evidence" value="ECO:0000314"/>
    <property type="project" value="UniProtKB"/>
</dbReference>
<dbReference type="GO" id="GO:0019369">
    <property type="term" value="P:arachidonate metabolic process"/>
    <property type="evidence" value="ECO:0000314"/>
    <property type="project" value="UniProtKB"/>
</dbReference>
<dbReference type="GO" id="GO:0050482">
    <property type="term" value="P:arachidonate secretion"/>
    <property type="evidence" value="ECO:0007669"/>
    <property type="project" value="Ensembl"/>
</dbReference>
<dbReference type="GO" id="GO:0071236">
    <property type="term" value="P:cellular response to antibiotic"/>
    <property type="evidence" value="ECO:0007669"/>
    <property type="project" value="Ensembl"/>
</dbReference>
<dbReference type="GO" id="GO:0051649">
    <property type="term" value="P:establishment of localization in cell"/>
    <property type="evidence" value="ECO:0007669"/>
    <property type="project" value="Ensembl"/>
</dbReference>
<dbReference type="GO" id="GO:0006071">
    <property type="term" value="P:glycerol metabolic process"/>
    <property type="evidence" value="ECO:0007669"/>
    <property type="project" value="UniProtKB-KW"/>
</dbReference>
<dbReference type="GO" id="GO:0046475">
    <property type="term" value="P:glycerophospholipid catabolic process"/>
    <property type="evidence" value="ECO:0000318"/>
    <property type="project" value="GO_Central"/>
</dbReference>
<dbReference type="GO" id="GO:0006690">
    <property type="term" value="P:icosanoid metabolic process"/>
    <property type="evidence" value="ECO:0000303"/>
    <property type="project" value="UniProtKB"/>
</dbReference>
<dbReference type="GO" id="GO:0019370">
    <property type="term" value="P:leukotriene biosynthetic process"/>
    <property type="evidence" value="ECO:0000315"/>
    <property type="project" value="UniProtKB"/>
</dbReference>
<dbReference type="GO" id="GO:0006640">
    <property type="term" value="P:monoacylglycerol biosynthetic process"/>
    <property type="evidence" value="ECO:0000314"/>
    <property type="project" value="UniProtKB"/>
</dbReference>
<dbReference type="GO" id="GO:0036151">
    <property type="term" value="P:phosphatidylcholine acyl-chain remodeling"/>
    <property type="evidence" value="ECO:0000314"/>
    <property type="project" value="UniProtKB"/>
</dbReference>
<dbReference type="GO" id="GO:0034638">
    <property type="term" value="P:phosphatidylcholine catabolic process"/>
    <property type="evidence" value="ECO:0000314"/>
    <property type="project" value="UniProtKB"/>
</dbReference>
<dbReference type="GO" id="GO:0034478">
    <property type="term" value="P:phosphatidylglycerol catabolic process"/>
    <property type="evidence" value="ECO:0000314"/>
    <property type="project" value="UniProtKB"/>
</dbReference>
<dbReference type="GO" id="GO:0006663">
    <property type="term" value="P:platelet activating factor biosynthetic process"/>
    <property type="evidence" value="ECO:0000303"/>
    <property type="project" value="UniProtKB"/>
</dbReference>
<dbReference type="GO" id="GO:0043032">
    <property type="term" value="P:positive regulation of macrophage activation"/>
    <property type="evidence" value="ECO:0007669"/>
    <property type="project" value="Ensembl"/>
</dbReference>
<dbReference type="GO" id="GO:0010572">
    <property type="term" value="P:positive regulation of platelet activation"/>
    <property type="evidence" value="ECO:0000315"/>
    <property type="project" value="UniProtKB"/>
</dbReference>
<dbReference type="GO" id="GO:0032308">
    <property type="term" value="P:positive regulation of prostaglandin secretion"/>
    <property type="evidence" value="ECO:0007669"/>
    <property type="project" value="Ensembl"/>
</dbReference>
<dbReference type="GO" id="GO:0002827">
    <property type="term" value="P:positive regulation of T-helper 1 type immune response"/>
    <property type="evidence" value="ECO:0007669"/>
    <property type="project" value="Ensembl"/>
</dbReference>
<dbReference type="GO" id="GO:0001516">
    <property type="term" value="P:prostaglandin biosynthetic process"/>
    <property type="evidence" value="ECO:0000314"/>
    <property type="project" value="UniProtKB"/>
</dbReference>
<dbReference type="GO" id="GO:0042127">
    <property type="term" value="P:regulation of cell population proliferation"/>
    <property type="evidence" value="ECO:0007669"/>
    <property type="project" value="Ensembl"/>
</dbReference>
<dbReference type="CDD" id="cd04036">
    <property type="entry name" value="C2_cPLA2"/>
    <property type="match status" value="1"/>
</dbReference>
<dbReference type="CDD" id="cd07200">
    <property type="entry name" value="cPLA2_Grp-IVA"/>
    <property type="match status" value="1"/>
</dbReference>
<dbReference type="FunFam" id="2.60.40.150:FF:000030">
    <property type="entry name" value="Phospholipase A2"/>
    <property type="match status" value="1"/>
</dbReference>
<dbReference type="Gene3D" id="2.60.40.150">
    <property type="entry name" value="C2 domain"/>
    <property type="match status" value="1"/>
</dbReference>
<dbReference type="Gene3D" id="3.40.1090.10">
    <property type="entry name" value="Cytosolic phospholipase A2 catalytic domain"/>
    <property type="match status" value="1"/>
</dbReference>
<dbReference type="InterPro" id="IPR016035">
    <property type="entry name" value="Acyl_Trfase/lysoPLipase"/>
</dbReference>
<dbReference type="InterPro" id="IPR041847">
    <property type="entry name" value="C2_cPLA2"/>
</dbReference>
<dbReference type="InterPro" id="IPR000008">
    <property type="entry name" value="C2_dom"/>
</dbReference>
<dbReference type="InterPro" id="IPR035892">
    <property type="entry name" value="C2_domain_sf"/>
</dbReference>
<dbReference type="InterPro" id="IPR002642">
    <property type="entry name" value="LysoPLipase_cat_dom"/>
</dbReference>
<dbReference type="PANTHER" id="PTHR10728">
    <property type="entry name" value="CYTOSOLIC PHOSPHOLIPASE A2"/>
    <property type="match status" value="1"/>
</dbReference>
<dbReference type="PANTHER" id="PTHR10728:SF13">
    <property type="entry name" value="CYTOSOLIC PHOSPHOLIPASE A2"/>
    <property type="match status" value="1"/>
</dbReference>
<dbReference type="Pfam" id="PF00168">
    <property type="entry name" value="C2"/>
    <property type="match status" value="1"/>
</dbReference>
<dbReference type="Pfam" id="PF01735">
    <property type="entry name" value="PLA2_B"/>
    <property type="match status" value="1"/>
</dbReference>
<dbReference type="SMART" id="SM00239">
    <property type="entry name" value="C2"/>
    <property type="match status" value="1"/>
</dbReference>
<dbReference type="SMART" id="SM00022">
    <property type="entry name" value="PLAc"/>
    <property type="match status" value="1"/>
</dbReference>
<dbReference type="SUPFAM" id="SSF49562">
    <property type="entry name" value="C2 domain (Calcium/lipid-binding domain, CaLB)"/>
    <property type="match status" value="1"/>
</dbReference>
<dbReference type="SUPFAM" id="SSF52151">
    <property type="entry name" value="FabD/lysophospholipase-like"/>
    <property type="match status" value="1"/>
</dbReference>
<dbReference type="PROSITE" id="PS50004">
    <property type="entry name" value="C2"/>
    <property type="match status" value="1"/>
</dbReference>
<dbReference type="PROSITE" id="PS51210">
    <property type="entry name" value="PLA2C"/>
    <property type="match status" value="1"/>
</dbReference>
<evidence type="ECO:0000250" key="1">
    <source>
        <dbReference type="UniProtKB" id="P47713"/>
    </source>
</evidence>
<evidence type="ECO:0000250" key="2">
    <source>
        <dbReference type="UniProtKB" id="P50393"/>
    </source>
</evidence>
<evidence type="ECO:0000255" key="3">
    <source>
        <dbReference type="PROSITE-ProRule" id="PRU00041"/>
    </source>
</evidence>
<evidence type="ECO:0000255" key="4">
    <source>
        <dbReference type="PROSITE-ProRule" id="PRU00555"/>
    </source>
</evidence>
<evidence type="ECO:0000256" key="5">
    <source>
        <dbReference type="SAM" id="MobiDB-lite"/>
    </source>
</evidence>
<evidence type="ECO:0000269" key="6">
    <source>
    </source>
</evidence>
<evidence type="ECO:0000269" key="7">
    <source>
    </source>
</evidence>
<evidence type="ECO:0000269" key="8">
    <source>
    </source>
</evidence>
<evidence type="ECO:0000269" key="9">
    <source>
    </source>
</evidence>
<evidence type="ECO:0000269" key="10">
    <source>
    </source>
</evidence>
<evidence type="ECO:0000269" key="11">
    <source>
    </source>
</evidence>
<evidence type="ECO:0000269" key="12">
    <source>
    </source>
</evidence>
<evidence type="ECO:0000269" key="13">
    <source>
    </source>
</evidence>
<evidence type="ECO:0000269" key="14">
    <source>
    </source>
</evidence>
<evidence type="ECO:0000269" key="15">
    <source>
    </source>
</evidence>
<evidence type="ECO:0000269" key="16">
    <source>
    </source>
</evidence>
<evidence type="ECO:0000269" key="17">
    <source>
    </source>
</evidence>
<evidence type="ECO:0000269" key="18">
    <source>
    </source>
</evidence>
<evidence type="ECO:0000269" key="19">
    <source>
    </source>
</evidence>
<evidence type="ECO:0000269" key="20">
    <source>
    </source>
</evidence>
<evidence type="ECO:0000269" key="21">
    <source>
    </source>
</evidence>
<evidence type="ECO:0000269" key="22">
    <source>
    </source>
</evidence>
<evidence type="ECO:0000269" key="23">
    <source>
    </source>
</evidence>
<evidence type="ECO:0000269" key="24">
    <source>
    </source>
</evidence>
<evidence type="ECO:0000269" key="25">
    <source>
    </source>
</evidence>
<evidence type="ECO:0000269" key="26">
    <source>
    </source>
</evidence>
<evidence type="ECO:0000269" key="27">
    <source>
    </source>
</evidence>
<evidence type="ECO:0000269" key="28">
    <source>
    </source>
</evidence>
<evidence type="ECO:0000269" key="29">
    <source>
    </source>
</evidence>
<evidence type="ECO:0000269" key="30">
    <source>
    </source>
</evidence>
<evidence type="ECO:0000269" key="31">
    <source ref="3"/>
</evidence>
<evidence type="ECO:0000305" key="32"/>
<evidence type="ECO:0000305" key="33">
    <source>
    </source>
</evidence>
<evidence type="ECO:0000305" key="34">
    <source>
    </source>
</evidence>
<evidence type="ECO:0000305" key="35">
    <source>
    </source>
</evidence>
<evidence type="ECO:0000305" key="36">
    <source>
    </source>
</evidence>
<evidence type="ECO:0000305" key="37">
    <source>
    </source>
</evidence>
<evidence type="ECO:0000305" key="38">
    <source>
    </source>
</evidence>
<evidence type="ECO:0000305" key="39">
    <source>
    </source>
</evidence>
<evidence type="ECO:0000305" key="40">
    <source>
    </source>
</evidence>
<evidence type="ECO:0000305" key="41">
    <source>
    </source>
</evidence>
<evidence type="ECO:0007744" key="42">
    <source>
    </source>
</evidence>
<evidence type="ECO:0007744" key="43">
    <source>
    </source>
</evidence>
<evidence type="ECO:0007744" key="44">
    <source>
    </source>
</evidence>
<evidence type="ECO:0007744" key="45">
    <source>
    </source>
</evidence>
<evidence type="ECO:0007744" key="46">
    <source>
    </source>
</evidence>
<evidence type="ECO:0007744" key="47">
    <source>
    </source>
</evidence>
<evidence type="ECO:0007829" key="48">
    <source>
        <dbReference type="PDB" id="1BCI"/>
    </source>
</evidence>
<evidence type="ECO:0007829" key="49">
    <source>
        <dbReference type="PDB" id="1CJY"/>
    </source>
</evidence>
<evidence type="ECO:0007829" key="50">
    <source>
        <dbReference type="PDB" id="1RLW"/>
    </source>
</evidence>
<proteinExistence type="evidence at protein level"/>
<name>PA24A_HUMAN</name>
<accession>P47712</accession>
<accession>B1AKG4</accession>
<accession>Q29R80</accession>
<keyword id="KW-0002">3D-structure</keyword>
<keyword id="KW-0106">Calcium</keyword>
<keyword id="KW-0963">Cytoplasm</keyword>
<keyword id="KW-0903">Direct protein sequencing</keyword>
<keyword id="KW-0225">Disease variant</keyword>
<keyword id="KW-0275">Fatty acid biosynthesis</keyword>
<keyword id="KW-0276">Fatty acid metabolism</keyword>
<keyword id="KW-0319">Glycerol metabolism</keyword>
<keyword id="KW-0333">Golgi apparatus</keyword>
<keyword id="KW-0378">Hydrolase</keyword>
<keyword id="KW-1017">Isopeptide bond</keyword>
<keyword id="KW-0434">Leukotriene biosynthesis</keyword>
<keyword id="KW-0444">Lipid biosynthesis</keyword>
<keyword id="KW-0442">Lipid degradation</keyword>
<keyword id="KW-0443">Lipid metabolism</keyword>
<keyword id="KW-0446">Lipid-binding</keyword>
<keyword id="KW-0472">Membrane</keyword>
<keyword id="KW-0479">Metal-binding</keyword>
<keyword id="KW-0539">Nucleus</keyword>
<keyword id="KW-0595">Phospholipid degradation</keyword>
<keyword id="KW-1208">Phospholipid metabolism</keyword>
<keyword id="KW-0597">Phosphoprotein</keyword>
<keyword id="KW-0643">Prostaglandin biosynthesis</keyword>
<keyword id="KW-0644">Prostaglandin metabolism</keyword>
<keyword id="KW-1267">Proteomics identification</keyword>
<keyword id="KW-1185">Reference proteome</keyword>
<keyword id="KW-0832">Ubl conjugation</keyword>
<organism>
    <name type="scientific">Homo sapiens</name>
    <name type="common">Human</name>
    <dbReference type="NCBI Taxonomy" id="9606"/>
    <lineage>
        <taxon>Eukaryota</taxon>
        <taxon>Metazoa</taxon>
        <taxon>Chordata</taxon>
        <taxon>Craniata</taxon>
        <taxon>Vertebrata</taxon>
        <taxon>Euteleostomi</taxon>
        <taxon>Mammalia</taxon>
        <taxon>Eutheria</taxon>
        <taxon>Euarchontoglires</taxon>
        <taxon>Primates</taxon>
        <taxon>Haplorrhini</taxon>
        <taxon>Catarrhini</taxon>
        <taxon>Hominidae</taxon>
        <taxon>Homo</taxon>
    </lineage>
</organism>